<comment type="function">
    <text evidence="6 7 8 9 12 13 14 15 17 19 20 21 23 25 30 31 32">Stress-activated component of a protein kinase signal transduction cascade that promotes programmed cell death in response to various stress, such as ribosomal stress, osmotic shock and ionizing radiation (PubMed:10924358, PubMed:11836244, PubMed:12220515, PubMed:14521931, PubMed:15350844, PubMed:15737997, PubMed:18331592, PubMed:20559024, PubMed:26999302, PubMed:32289254, PubMed:32610081, PubMed:35857590). Acts by catalyzing phosphorylation of MAP kinase kinases, leading to activation of the JNK (MAPK8/JNK1, MAPK9/JNK2 and/or MAPK10/JNK3) and MAP kinase p38 (MAPK11, MAPK12, MAPK13 and/or MAPK14) pathways (PubMed:11042189, PubMed:11836244, PubMed:12220515, PubMed:14521931, PubMed:15172994, PubMed:15737997, PubMed:32289254, PubMed:32610081, PubMed:35857590). Activates JNK through phosphorylation of MAP2K4/MKK4 and MAP2K7/MKK7, and MAP kinase p38 gamma (MAPK12) via phosphorylation of MAP2K3/MKK3 and MAP2K6/MKK6 (PubMed:11836244, PubMed:12220515). Involved in stress associated with adrenergic stimulation: contributes to cardiac decompensation during periods of acute cardiac stress (PubMed:15350844, PubMed:21224381, PubMed:27859413). May be involved in regulation of S and G2 cell cycle checkpoint by mediating phosphorylation of CHEK2 (PubMed:15342622).</text>
</comment>
<comment type="function">
    <molecule>Isoform ZAKalpha</molecule>
    <text evidence="16 30 31 32">Key component of the stress-activated protein kinase signaling cascade in response to ribotoxic stress or UV-B irradiation (PubMed:32289254, PubMed:32610081, PubMed:35857590). Acts as the proximal sensor of ribosome collisions during the ribotoxic stress response (RSR): directly binds to the ribosome by inserting its flexible C-terminus into the ribosomal intersubunit space, thereby acting as a sentinel for colliding ribosomes (PubMed:32289254, PubMed:32610081). Upon ribosome collisions, activates either the stress-activated protein kinase signal transduction cascade or the integrated stress response (ISR), leading to programmed cell death or cell survival, respectively (PubMed:32610081). Dangerous levels of ribosome collisions trigger the autophosphorylation and activation of MAP3K20, which dissociates from colliding ribosomes and phosphorylates MAP kinase kinases, leading to activation of the JNK and MAP kinase p38 pathways that promote programmed cell death (PubMed:32289254, PubMed:32610081). Less dangerous levels of ribosome collisions trigger the integrated stress response (ISR): MAP3K20 activates EIF2AK4/GCN2 independently of its protein-kinase activity, promoting EIF2AK4/GCN2-mediated phosphorylation of EIF2S1/eIF-2-alpha (PubMed:32610081). Also part of the stress-activated protein kinase signaling cascade triggering the NLRP1 inflammasome in response to UV-B irradiation: ribosome collisions activate MAP3K20, which directly phosphorylates NLRP1, leading to activation of the NLRP1 inflammasome and subsequent pyroptosis (PubMed:35857590). NLRP1 is also phosphorylated by MAP kinase p38 downstream of MAP3K20 (PubMed:35857590). Also acts as a histone kinase by phosphorylating histone H3 at 'Ser-28' (H3S28ph) (PubMed:15684425).</text>
</comment>
<comment type="function">
    <molecule>Isoform ZAKbeta</molecule>
    <text evidence="25 30 31 32">Isoform that lacks the C-terminal region that mediates ribosome-binding: does not act as a sensor of ribosome collisions in response to ribotoxic stress (PubMed:32289254, PubMed:32610081, PubMed:35857590). May act as an antagonist of isoform ZAKalpha: interacts with isoform ZAKalpha, leading to decrease the expression of isoform ZAKalpha (PubMed:27859413).</text>
</comment>
<comment type="catalytic activity">
    <reaction evidence="8 12 23 30 31 32">
        <text>L-seryl-[protein] + ATP = O-phospho-L-seryl-[protein] + ADP + H(+)</text>
        <dbReference type="Rhea" id="RHEA:17989"/>
        <dbReference type="Rhea" id="RHEA-COMP:9863"/>
        <dbReference type="Rhea" id="RHEA-COMP:11604"/>
        <dbReference type="ChEBI" id="CHEBI:15378"/>
        <dbReference type="ChEBI" id="CHEBI:29999"/>
        <dbReference type="ChEBI" id="CHEBI:30616"/>
        <dbReference type="ChEBI" id="CHEBI:83421"/>
        <dbReference type="ChEBI" id="CHEBI:456216"/>
        <dbReference type="EC" id="2.7.11.25"/>
    </reaction>
    <physiologicalReaction direction="left-to-right" evidence="8 12 23 30 31 32">
        <dbReference type="Rhea" id="RHEA:17990"/>
    </physiologicalReaction>
</comment>
<comment type="catalytic activity">
    <reaction evidence="8 12 23 30 31 32">
        <text>L-threonyl-[protein] + ATP = O-phospho-L-threonyl-[protein] + ADP + H(+)</text>
        <dbReference type="Rhea" id="RHEA:46608"/>
        <dbReference type="Rhea" id="RHEA-COMP:11060"/>
        <dbReference type="Rhea" id="RHEA-COMP:11605"/>
        <dbReference type="ChEBI" id="CHEBI:15378"/>
        <dbReference type="ChEBI" id="CHEBI:30013"/>
        <dbReference type="ChEBI" id="CHEBI:30616"/>
        <dbReference type="ChEBI" id="CHEBI:61977"/>
        <dbReference type="ChEBI" id="CHEBI:456216"/>
        <dbReference type="EC" id="2.7.11.25"/>
    </reaction>
    <physiologicalReaction direction="left-to-right" evidence="8 12 23 30 31 32">
        <dbReference type="Rhea" id="RHEA:46609"/>
    </physiologicalReaction>
</comment>
<comment type="cofactor">
    <cofactor evidence="8">
        <name>Mg(2+)</name>
        <dbReference type="ChEBI" id="CHEBI:18420"/>
    </cofactor>
</comment>
<comment type="activity regulation">
    <text evidence="7 9 11 14 23 26 28 30 31">Activated in response to stress, such as ribosomal stress, osmotic shock and ionizing radiation (PubMed:11042189, PubMed:12761180, PubMed:15342622, PubMed:32289254, PubMed:32610081). Activated by phosphorylation by PKN1, followed by autophosphorylation on Thr-161 and Ser-165 (PubMed:11042189, PubMed:12220515, PubMed:12761180, PubMed:15342622, PubMed:26999302). Inhibited by nilotinib, sorafenib, dabrafenib, rebastinib and vemurafenib (PubMed:26999302). Selectively inhibited by N-(3)-((1H-Pyrazolo[3,4-b]pyridin-5-yl)ethynyl)benzenesulfonamide compound 3h (PubMed:28586211). Selectively inhibited by 1,2,3-triazole benzenesulfonamides (PubMed:31244114).</text>
</comment>
<comment type="biophysicochemical properties">
    <kinetics>
        <KM evidence="12">60 uM for ATP</KM>
    </kinetics>
</comment>
<comment type="subunit">
    <text evidence="6 10 21 22 31">Homodimer (PubMed:10924358, PubMed:26755636). Interacts with ZNF33A (PubMed:12535642). Component of a signaling complex containing at least AKAP13, PKN1, MAPK14, MAP3K20 and MAP2K3 (PubMed:21224381). Within this complex, AKAP13 interacts directly with PKN1, which in turn recruits MAPK14, MAP2K3 and MAP3K20 (PubMed:21224381). Interacts with EIF2AK4/GCN2; promoting EIF2AK4/GCN2 kinase activity (PubMed:32610081).</text>
</comment>
<comment type="subunit">
    <molecule>Isoform ZAKalpha</molecule>
    <text evidence="25">Interacts with isoform ZAKbeta.</text>
</comment>
<comment type="subunit">
    <molecule>Isoform ZAKbeta</molecule>
    <text evidence="25">Interacts with isoform ZAKalpha.</text>
</comment>
<comment type="interaction">
    <interactant intactId="EBI-602273">
        <id>Q9NYL2</id>
    </interactant>
    <interactant intactId="EBI-73869">
        <id>O75582</id>
        <label>RPS6KA5</label>
    </interactant>
    <organismsDiffer>false</organismsDiffer>
    <experiments>4</experiments>
</comment>
<comment type="interaction">
    <interactant intactId="EBI-602273">
        <id>Q9NYL2</id>
    </interactant>
    <interactant intactId="EBI-476295">
        <id>P31947</id>
        <label>SFN</label>
    </interactant>
    <organismsDiffer>false</organismsDiffer>
    <experiments>4</experiments>
</comment>
<comment type="interaction">
    <interactant intactId="EBI-602273">
        <id>Q9NYL2</id>
    </interactant>
    <interactant intactId="EBI-347088">
        <id>P63104</id>
        <label>YWHAZ</label>
    </interactant>
    <organismsDiffer>false</organismsDiffer>
    <experiments>8</experiments>
</comment>
<comment type="interaction">
    <interactant intactId="EBI-602273">
        <id>Q9NYL2</id>
    </interactant>
    <interactant intactId="EBI-749400">
        <id>Q8N184</id>
        <label>ZNF567</label>
    </interactant>
    <organismsDiffer>false</organismsDiffer>
    <experiments>3</experiments>
</comment>
<comment type="interaction">
    <interactant intactId="EBI-687346">
        <id>Q9NYL2-1</id>
    </interactant>
    <interactant intactId="EBI-602382">
        <id>Q16512</id>
        <label>PKN1</label>
    </interactant>
    <organismsDiffer>false</organismsDiffer>
    <experiments>2</experiments>
</comment>
<comment type="interaction">
    <interactant intactId="EBI-10255081">
        <id>Q9NYL2-2</id>
    </interactant>
    <interactant intactId="EBI-2555749">
        <id>Q6P2D0</id>
        <label>ZFP1</label>
    </interactant>
    <organismsDiffer>false</organismsDiffer>
    <experiments>4</experiments>
</comment>
<comment type="interaction">
    <interactant intactId="EBI-10255081">
        <id>Q9NYL2-2</id>
    </interactant>
    <interactant intactId="EBI-7236323">
        <id>Q6ZN57</id>
        <label>ZFP2</label>
    </interactant>
    <organismsDiffer>false</organismsDiffer>
    <experiments>7</experiments>
</comment>
<comment type="interaction">
    <interactant intactId="EBI-10255081">
        <id>Q9NYL2-2</id>
    </interactant>
    <interactant intactId="EBI-11041653">
        <id>P13682</id>
        <label>ZNF35</label>
    </interactant>
    <organismsDiffer>false</organismsDiffer>
    <experiments>3</experiments>
</comment>
<comment type="interaction">
    <interactant intactId="EBI-10255081">
        <id>Q9NYL2-2</id>
    </interactant>
    <interactant intactId="EBI-749400">
        <id>Q8N184</id>
        <label>ZNF567</label>
    </interactant>
    <organismsDiffer>false</organismsDiffer>
    <experiments>7</experiments>
</comment>
<comment type="interaction">
    <interactant intactId="EBI-10255081">
        <id>Q9NYL2-2</id>
    </interactant>
    <interactant intactId="EBI-12376497">
        <id>Q6AZW8</id>
        <label>ZNF660</label>
    </interactant>
    <organismsDiffer>false</organismsDiffer>
    <experiments>3</experiments>
</comment>
<comment type="interaction">
    <interactant intactId="EBI-10255081">
        <id>Q9NYL2-2</id>
    </interactant>
    <interactant intactId="EBI-7138235">
        <id>Q9NQZ8</id>
        <label>ZNF71</label>
    </interactant>
    <organismsDiffer>false</organismsDiffer>
    <experiments>4</experiments>
</comment>
<comment type="subcellular location">
    <subcellularLocation>
        <location evidence="16">Cytoplasm</location>
    </subcellularLocation>
    <subcellularLocation>
        <location evidence="16">Nucleus</location>
    </subcellularLocation>
    <text evidence="16">Translocates to the nucleus upon ultraviolet B irradiation.</text>
</comment>
<comment type="alternative products">
    <event type="alternative splicing"/>
    <isoform>
        <id>Q9NYL2-1</id>
        <name evidence="41 42">ZAKalpha</name>
        <name>Alpha</name>
        <sequence type="displayed"/>
    </isoform>
    <isoform>
        <id>Q9NYL2-2</id>
        <name evidence="41">ZAKbeta</name>
        <name>Beta</name>
        <name evidence="37">MLK7</name>
        <sequence type="described" ref="VSP_051743 VSP_051744"/>
    </isoform>
    <isoform>
        <id>Q9NYL2-3</id>
        <name>3</name>
        <name>HCCS-4</name>
        <sequence type="described" ref="VSP_051741 VSP_051742"/>
    </isoform>
</comment>
<comment type="tissue specificity">
    <text evidence="6 8">Ubiquitously expressed. Isoform ZAKbeta is the predominant form in all tissues examined, except for liver, in which isoform ZAKalpha is more highly expressed.</text>
</comment>
<comment type="domain">
    <molecule>Isoform ZAKalpha</molecule>
    <text evidence="30">Recognizes stalled ribosomes via two separate and partially redundant sensor domains: the C-terminal domain (CTD) that binds the 18S ribosomal RNA (18S rRNA) and the sensing domain (S).</text>
</comment>
<comment type="PTM">
    <text evidence="9 11 14 23 30 31">Activated by phosphorylation by PKN1, followed by autophosphorylation on Thr-161 and Ser-165 (PubMed:12220515, PubMed:12761180, PubMed:15342622, PubMed:26999302). Autophosphorylation in response to ribotoxic stress promotes dissociation from colliding ribosomes and activation (PubMed:32289254, PubMed:32610081).</text>
</comment>
<comment type="disease" evidence="22 29">
    <disease id="DI-04698">
        <name>Split-foot malformation with mesoaxial polydactyly</name>
        <acronym>SFMMP</acronym>
        <description>An autosomal recessive disorder characterized by a split-foot defect, mesoaxial polydactyly, nail abnormalities of the hands, and sensorineural hearing loss.</description>
        <dbReference type="MIM" id="616890"/>
    </disease>
    <text>The disease is caused by variants affecting the gene represented in this entry.</text>
</comment>
<comment type="disease" evidence="24 27">
    <disease id="DI-05139">
        <name>Myopathy, centronuclear, 6, with fiber-type disproportion</name>
        <acronym>CNM6</acronym>
        <description>A form of centronuclear myopathy, a congenital muscle disorder characterized by progressive muscular weakness and wasting involving mainly limb girdle, trunk, and neck muscles. It may also affect distal muscles. Weakness may be present during childhood or adolescence or may not become evident until the third decade of life. Ptosis is a frequent clinical feature. The most prominent histopathologic features include high frequency of centrally located nuclei in muscle fibers not secondary to regeneration, radial arrangement of sarcoplasmic strands around the central nuclei, and predominance and hypotrophy of type 1 fibers. CNM6 is an autosomal recessive, slowly progressive form with onset in infancy or early childhood.</description>
        <dbReference type="MIM" id="617760"/>
    </disease>
    <text>The disease is caused by variants affecting the gene represented in this entry.</text>
</comment>
<comment type="similarity">
    <text evidence="44">Belongs to the protein kinase superfamily. STE Ser/Thr protein kinase family. MAP kinase kinase kinase subfamily.</text>
</comment>
<comment type="sequence caution" evidence="44">
    <conflict type="erroneous initiation">
        <sequence resource="EMBL-CDS" id="BAD92211"/>
    </conflict>
    <text>Extended N-terminus.</text>
</comment>
<proteinExistence type="evidence at protein level"/>
<evidence type="ECO:0000250" key="1">
    <source>
        <dbReference type="UniProtKB" id="P80192"/>
    </source>
</evidence>
<evidence type="ECO:0000255" key="2">
    <source>
        <dbReference type="PROSITE-ProRule" id="PRU00159"/>
    </source>
</evidence>
<evidence type="ECO:0000255" key="3">
    <source>
        <dbReference type="PROSITE-ProRule" id="PRU00184"/>
    </source>
</evidence>
<evidence type="ECO:0000255" key="4">
    <source>
        <dbReference type="PROSITE-ProRule" id="PRU10027"/>
    </source>
</evidence>
<evidence type="ECO:0000256" key="5">
    <source>
        <dbReference type="SAM" id="MobiDB-lite"/>
    </source>
</evidence>
<evidence type="ECO:0000269" key="6">
    <source>
    </source>
</evidence>
<evidence type="ECO:0000269" key="7">
    <source>
    </source>
</evidence>
<evidence type="ECO:0000269" key="8">
    <source>
    </source>
</evidence>
<evidence type="ECO:0000269" key="9">
    <source>
    </source>
</evidence>
<evidence type="ECO:0000269" key="10">
    <source>
    </source>
</evidence>
<evidence type="ECO:0000269" key="11">
    <source>
    </source>
</evidence>
<evidence type="ECO:0000269" key="12">
    <source>
    </source>
</evidence>
<evidence type="ECO:0000269" key="13">
    <source>
    </source>
</evidence>
<evidence type="ECO:0000269" key="14">
    <source>
    </source>
</evidence>
<evidence type="ECO:0000269" key="15">
    <source>
    </source>
</evidence>
<evidence type="ECO:0000269" key="16">
    <source>
    </source>
</evidence>
<evidence type="ECO:0000269" key="17">
    <source>
    </source>
</evidence>
<evidence type="ECO:0000269" key="18">
    <source>
    </source>
</evidence>
<evidence type="ECO:0000269" key="19">
    <source>
    </source>
</evidence>
<evidence type="ECO:0000269" key="20">
    <source>
    </source>
</evidence>
<evidence type="ECO:0000269" key="21">
    <source>
    </source>
</evidence>
<evidence type="ECO:0000269" key="22">
    <source>
    </source>
</evidence>
<evidence type="ECO:0000269" key="23">
    <source>
    </source>
</evidence>
<evidence type="ECO:0000269" key="24">
    <source>
    </source>
</evidence>
<evidence type="ECO:0000269" key="25">
    <source>
    </source>
</evidence>
<evidence type="ECO:0000269" key="26">
    <source>
    </source>
</evidence>
<evidence type="ECO:0000269" key="27">
    <source>
    </source>
</evidence>
<evidence type="ECO:0000269" key="28">
    <source>
    </source>
</evidence>
<evidence type="ECO:0000269" key="29">
    <source>
    </source>
</evidence>
<evidence type="ECO:0000269" key="30">
    <source>
    </source>
</evidence>
<evidence type="ECO:0000269" key="31">
    <source>
    </source>
</evidence>
<evidence type="ECO:0000269" key="32">
    <source>
    </source>
</evidence>
<evidence type="ECO:0000269" key="33">
    <source ref="6"/>
</evidence>
<evidence type="ECO:0000269" key="34">
    <source ref="9"/>
</evidence>
<evidence type="ECO:0000303" key="35">
    <source>
    </source>
</evidence>
<evidence type="ECO:0000303" key="36">
    <source>
    </source>
</evidence>
<evidence type="ECO:0000303" key="37">
    <source>
    </source>
</evidence>
<evidence type="ECO:0000303" key="38">
    <source>
    </source>
</evidence>
<evidence type="ECO:0000303" key="39">
    <source>
    </source>
</evidence>
<evidence type="ECO:0000303" key="40">
    <source>
    </source>
</evidence>
<evidence type="ECO:0000303" key="41">
    <source>
    </source>
</evidence>
<evidence type="ECO:0000303" key="42">
    <source>
    </source>
</evidence>
<evidence type="ECO:0000303" key="43">
    <source ref="7"/>
</evidence>
<evidence type="ECO:0000305" key="44"/>
<evidence type="ECO:0000312" key="45">
    <source>
        <dbReference type="EMBL" id="AAF63490.1"/>
    </source>
</evidence>
<evidence type="ECO:0000312" key="46">
    <source>
        <dbReference type="EMBL" id="AAH01401.1"/>
    </source>
</evidence>
<evidence type="ECO:0000312" key="47">
    <source>
        <dbReference type="EMBL" id="AAX82002.1"/>
    </source>
</evidence>
<evidence type="ECO:0000312" key="48">
    <source>
        <dbReference type="EMBL" id="BAB12040.1"/>
    </source>
</evidence>
<evidence type="ECO:0000312" key="49">
    <source>
        <dbReference type="EMBL" id="BAD92211.1"/>
    </source>
</evidence>
<evidence type="ECO:0000312" key="50">
    <source>
        <dbReference type="HGNC" id="HGNC:17797"/>
    </source>
</evidence>
<evidence type="ECO:0007744" key="51">
    <source>
        <dbReference type="PDB" id="5HES"/>
    </source>
</evidence>
<evidence type="ECO:0007744" key="52">
    <source>
        <dbReference type="PDB" id="5X5O"/>
    </source>
</evidence>
<evidence type="ECO:0007744" key="53">
    <source>
        <dbReference type="PDB" id="6JUT"/>
    </source>
</evidence>
<evidence type="ECO:0007744" key="54">
    <source>
        <dbReference type="PDB" id="6JUU"/>
    </source>
</evidence>
<evidence type="ECO:0007744" key="55">
    <source>
    </source>
</evidence>
<evidence type="ECO:0007744" key="56">
    <source>
    </source>
</evidence>
<evidence type="ECO:0007744" key="57">
    <source>
    </source>
</evidence>
<evidence type="ECO:0007744" key="58">
    <source>
    </source>
</evidence>
<evidence type="ECO:0007744" key="59">
    <source>
    </source>
</evidence>
<evidence type="ECO:0007744" key="60">
    <source>
    </source>
</evidence>
<evidence type="ECO:0007744" key="61">
    <source>
    </source>
</evidence>
<evidence type="ECO:0007744" key="62">
    <source>
    </source>
</evidence>
<evidence type="ECO:0007829" key="63">
    <source>
        <dbReference type="PDB" id="5X5O"/>
    </source>
</evidence>
<evidence type="ECO:0007829" key="64">
    <source>
        <dbReference type="PDB" id="6JUT"/>
    </source>
</evidence>
<gene>
    <name evidence="50" type="primary">MAP3K20</name>
    <name evidence="37" type="synonym">MLK7</name>
    <name evidence="36" type="synonym">MLTK</name>
    <name evidence="35" type="synonym">ZAK</name>
    <name type="ORF">HCCS4</name>
</gene>
<sequence length="800" mass="91155">MSSLGASFVQIKFDDLQFFENCGGGSFGSVYRAKWISQDKEVAVKKLLKIEKEAEILSVLSHRNIIQFYGVILEPPNYGIVTEYASLGSLYDYINSNRSEEMDMDHIMTWATDVAKGMHYLHMEAPVKVIHRDLKSRNVVIAADGVLKICDFGASRFHNHTTHMSLVGTFPWMAPEVIQSLPVSETCDTYSYGVVLWEMLTREVPFKGLEGLQVAWLVVEKNERLTIPSSCPRSFAELLHQCWEADAKKRPSFKQIISILESMSNDTSLPDKCNSFLHNKAEWRCEIEATLERLKKLERDLSFKEQELKERERRLKMWEQKLTEQSNTPLLPSFEIGAWTEDDVYCWVQQLVRKGDSSAEMSVYASLFKENNITGKRLLLLEEEDLKDMGIVSKGHIIHFKSAIEKLTHDYINLFHFPPLIKDSGGEPEENEEKIVNLELVFGFHLKPGTGPQDCKWKMYMEMDGDEIAITYIKDVTFNTNLPDAEILKMTKPPFVMEKWIVGIAKSQTVECTVTYESDVRTPKSTKHVHSIQWSRTKPQDEVKAVQLAIQTLFTNSDGNPGSRSDSSADCQWLDTLRMRQIASNTSLQRSQSNPILGSPFFSHFDGQDSYAAAVRRPQVPIKYQQITPVNQSRSSSPTQYGLTKNFSSLHLNSRDSGFSSGNTDTSSERGRYSDRSRNKYGRGSISLNSSPRGRYSGKSQHSTPSRGRYPGKFYRVSQSALNPHQSPDFKRSPRDLHQPNTIPGMPLHPETDSRASEEDSKVSEGGWTKVEYRKKPHRPSPAKTNKERARGDHRGWRNF</sequence>
<reference evidence="44 45" key="1">
    <citation type="journal article" date="2000" name="Biochem. Biophys. Res. Commun.">
        <title>Cloning and expression of ZAK, a mixed lineage kinase-like protein containing a leucine-zipper and a sterile-alpha motif.</title>
        <authorList>
            <person name="Liu T.-C."/>
            <person name="Huang C.-J."/>
            <person name="Chu Y.-C."/>
            <person name="Wei C.-C."/>
            <person name="Chou C.-C."/>
            <person name="Chou M.-Y."/>
            <person name="Chou C.-K."/>
            <person name="Yang J.-J."/>
        </authorList>
    </citation>
    <scope>NUCLEOTIDE SEQUENCE [MRNA] (ISOFORM ZAKALPHA)</scope>
    <scope>FUNCTION</scope>
    <scope>TISSUE SPECIFICITY</scope>
    <scope>HOMODIMERIZATION</scope>
    <scope>VARIANT LEU-531</scope>
    <source>
        <tissue evidence="6">Placenta</tissue>
    </source>
</reference>
<reference key="2">
    <citation type="journal article" date="2001" name="J. Biol. Chem.">
        <title>Identification and characterization of a novel MAP kinase kinase kinase, MLTK.</title>
        <authorList>
            <person name="Gotoh I."/>
            <person name="Adachi M."/>
            <person name="Nishida E."/>
        </authorList>
    </citation>
    <scope>NUCLEOTIDE SEQUENCE [MRNA] (ISOFORMS ZAKALPHA AND ZAKBETA)</scope>
    <scope>FUNCTION</scope>
    <scope>PHOSPHORYLATION AT SER-429 (ISOFORM ZAKBETA)</scope>
    <scope>VARIANT LEU-531</scope>
    <source>
        <tissue>Fetal brain</tissue>
    </source>
</reference>
<reference key="3">
    <citation type="journal article" date="2001" name="J. Mol. Cell. Cardiol.">
        <title>Tissue distribution and functional expression of a cDNA encoding a novel mixed lineage kinase.</title>
        <authorList>
            <person name="Bloem L.J."/>
            <person name="Pickard T.R."/>
            <person name="Acton S."/>
            <person name="Donoghue M."/>
            <person name="Beavis R.C."/>
            <person name="Knierman M.D."/>
            <person name="Wang X."/>
        </authorList>
    </citation>
    <scope>NUCLEOTIDE SEQUENCE [MRNA] (ISOFORM ZAKBETA)</scope>
    <source>
        <tissue>Heart</tissue>
    </source>
</reference>
<reference key="4">
    <citation type="journal article" date="2002" name="J. Biol. Chem.">
        <title>MRK, a mixed lineage kinase-related molecule that plays a role in gamma-radiation-induced cell cycle arrest.</title>
        <authorList>
            <person name="Gross E.A."/>
            <person name="Callow M.G."/>
            <person name="Waldbaum L."/>
            <person name="Thomas S."/>
            <person name="Ruggieri R."/>
        </authorList>
    </citation>
    <scope>NUCLEOTIDE SEQUENCE [MRNA] (ISOFORMS ZAKALPHA AND ZAKBETA)</scope>
    <scope>FUNCTION</scope>
    <scope>TISSUE SPECIFICITY</scope>
    <scope>MUTAGENESIS OF LYS-45</scope>
    <scope>VARIANT LEU-531</scope>
    <source>
        <tissue evidence="8">T-cell</tissue>
    </source>
</reference>
<reference evidence="44 48" key="5">
    <citation type="submission" date="1999-07" db="EMBL/GenBank/DDBJ databases">
        <title>Placible mixed-lineage kinase derived from LAK cell.</title>
        <authorList>
            <person name="Abe Y."/>
            <person name="Ueda N."/>
        </authorList>
    </citation>
    <scope>NUCLEOTIDE SEQUENCE [MRNA] (ISOFORM ZAKALPHA)</scope>
    <source>
        <tissue>Lymphoid tissue</tissue>
    </source>
</reference>
<reference evidence="44 48" key="6">
    <citation type="submission" date="2000-04" db="EMBL/GenBank/DDBJ databases">
        <title>Cloning and characterisation of AZK, a mixed lineage kinase containing a sterile-alpha motif.</title>
        <authorList>
            <person name="McNee J.J."/>
            <person name="Frima N."/>
            <person name="Diamond T.E."/>
            <person name="Dower S.K."/>
            <person name="Guesdon F."/>
        </authorList>
    </citation>
    <scope>NUCLEOTIDE SEQUENCE [MRNA] (ISOFORM ZAKALPHA)</scope>
    <scope>VARIANT LEU-531</scope>
</reference>
<reference evidence="44 48" key="7">
    <citation type="submission" date="2002-01" db="EMBL/GenBank/DDBJ databases">
        <title>Identification of a new tumor suppressor in human cancers.</title>
        <authorList>
            <person name="Kim J.W."/>
        </authorList>
    </citation>
    <scope>NUCLEOTIDE SEQUENCE [LARGE SCALE MRNA] (ISOFORM 3)</scope>
</reference>
<reference key="8">
    <citation type="journal article" date="2004" name="Nat. Genet.">
        <title>Complete sequencing and characterization of 21,243 full-length human cDNAs.</title>
        <authorList>
            <person name="Ota T."/>
            <person name="Suzuki Y."/>
            <person name="Nishikawa T."/>
            <person name="Otsuki T."/>
            <person name="Sugiyama T."/>
            <person name="Irie R."/>
            <person name="Wakamatsu A."/>
            <person name="Hayashi K."/>
            <person name="Sato H."/>
            <person name="Nagai K."/>
            <person name="Kimura K."/>
            <person name="Makita H."/>
            <person name="Sekine M."/>
            <person name="Obayashi M."/>
            <person name="Nishi T."/>
            <person name="Shibahara T."/>
            <person name="Tanaka T."/>
            <person name="Ishii S."/>
            <person name="Yamamoto J."/>
            <person name="Saito K."/>
            <person name="Kawai Y."/>
            <person name="Isono Y."/>
            <person name="Nakamura Y."/>
            <person name="Nagahari K."/>
            <person name="Murakami K."/>
            <person name="Yasuda T."/>
            <person name="Iwayanagi T."/>
            <person name="Wagatsuma M."/>
            <person name="Shiratori A."/>
            <person name="Sudo H."/>
            <person name="Hosoiri T."/>
            <person name="Kaku Y."/>
            <person name="Kodaira H."/>
            <person name="Kondo H."/>
            <person name="Sugawara M."/>
            <person name="Takahashi M."/>
            <person name="Kanda K."/>
            <person name="Yokoi T."/>
            <person name="Furuya T."/>
            <person name="Kikkawa E."/>
            <person name="Omura Y."/>
            <person name="Abe K."/>
            <person name="Kamihara K."/>
            <person name="Katsuta N."/>
            <person name="Sato K."/>
            <person name="Tanikawa M."/>
            <person name="Yamazaki M."/>
            <person name="Ninomiya K."/>
            <person name="Ishibashi T."/>
            <person name="Yamashita H."/>
            <person name="Murakawa K."/>
            <person name="Fujimori K."/>
            <person name="Tanai H."/>
            <person name="Kimata M."/>
            <person name="Watanabe M."/>
            <person name="Hiraoka S."/>
            <person name="Chiba Y."/>
            <person name="Ishida S."/>
            <person name="Ono Y."/>
            <person name="Takiguchi S."/>
            <person name="Watanabe S."/>
            <person name="Yosida M."/>
            <person name="Hotuta T."/>
            <person name="Kusano J."/>
            <person name="Kanehori K."/>
            <person name="Takahashi-Fujii A."/>
            <person name="Hara H."/>
            <person name="Tanase T.-O."/>
            <person name="Nomura Y."/>
            <person name="Togiya S."/>
            <person name="Komai F."/>
            <person name="Hara R."/>
            <person name="Takeuchi K."/>
            <person name="Arita M."/>
            <person name="Imose N."/>
            <person name="Musashino K."/>
            <person name="Yuuki H."/>
            <person name="Oshima A."/>
            <person name="Sasaki N."/>
            <person name="Aotsuka S."/>
            <person name="Yoshikawa Y."/>
            <person name="Matsunawa H."/>
            <person name="Ichihara T."/>
            <person name="Shiohata N."/>
            <person name="Sano S."/>
            <person name="Moriya S."/>
            <person name="Momiyama H."/>
            <person name="Satoh N."/>
            <person name="Takami S."/>
            <person name="Terashima Y."/>
            <person name="Suzuki O."/>
            <person name="Nakagawa S."/>
            <person name="Senoh A."/>
            <person name="Mizoguchi H."/>
            <person name="Goto Y."/>
            <person name="Shimizu F."/>
            <person name="Wakebe H."/>
            <person name="Hishigaki H."/>
            <person name="Watanabe T."/>
            <person name="Sugiyama A."/>
            <person name="Takemoto M."/>
            <person name="Kawakami B."/>
            <person name="Yamazaki M."/>
            <person name="Watanabe K."/>
            <person name="Kumagai A."/>
            <person name="Itakura S."/>
            <person name="Fukuzumi Y."/>
            <person name="Fujimori Y."/>
            <person name="Komiyama M."/>
            <person name="Tashiro H."/>
            <person name="Tanigami A."/>
            <person name="Fujiwara T."/>
            <person name="Ono T."/>
            <person name="Yamada K."/>
            <person name="Fujii Y."/>
            <person name="Ozaki K."/>
            <person name="Hirao M."/>
            <person name="Ohmori Y."/>
            <person name="Kawabata A."/>
            <person name="Hikiji T."/>
            <person name="Kobatake N."/>
            <person name="Inagaki H."/>
            <person name="Ikema Y."/>
            <person name="Okamoto S."/>
            <person name="Okitani R."/>
            <person name="Kawakami T."/>
            <person name="Noguchi S."/>
            <person name="Itoh T."/>
            <person name="Shigeta K."/>
            <person name="Senba T."/>
            <person name="Matsumura K."/>
            <person name="Nakajima Y."/>
            <person name="Mizuno T."/>
            <person name="Morinaga M."/>
            <person name="Sasaki M."/>
            <person name="Togashi T."/>
            <person name="Oyama M."/>
            <person name="Hata H."/>
            <person name="Watanabe M."/>
            <person name="Komatsu T."/>
            <person name="Mizushima-Sugano J."/>
            <person name="Satoh T."/>
            <person name="Shirai Y."/>
            <person name="Takahashi Y."/>
            <person name="Nakagawa K."/>
            <person name="Okumura K."/>
            <person name="Nagase T."/>
            <person name="Nomura N."/>
            <person name="Kikuchi H."/>
            <person name="Masuho Y."/>
            <person name="Yamashita R."/>
            <person name="Nakai K."/>
            <person name="Yada T."/>
            <person name="Nakamura Y."/>
            <person name="Ohara O."/>
            <person name="Isogai T."/>
            <person name="Sugano S."/>
        </authorList>
    </citation>
    <scope>NUCLEOTIDE SEQUENCE [LARGE SCALE MRNA] (ISOFORM ZAKBETA)</scope>
</reference>
<reference evidence="44 48" key="9">
    <citation type="submission" date="2005-03" db="EMBL/GenBank/DDBJ databases">
        <authorList>
            <person name="Totoki Y."/>
            <person name="Toyoda A."/>
            <person name="Takeda T."/>
            <person name="Sakaki Y."/>
            <person name="Tanaka A."/>
            <person name="Yokoyama S."/>
            <person name="Ohara O."/>
            <person name="Nagase T."/>
            <person name="Kikuno R.F."/>
        </authorList>
    </citation>
    <scope>NUCLEOTIDE SEQUENCE [LARGE SCALE MRNA] (ISOFORM ZAKALPHA)</scope>
    <scope>VARIANT THR-784</scope>
    <source>
        <tissue evidence="49">Brain</tissue>
    </source>
</reference>
<reference evidence="47" key="10">
    <citation type="journal article" date="2005" name="Nature">
        <title>Generation and annotation of the DNA sequences of human chromosomes 2 and 4.</title>
        <authorList>
            <person name="Hillier L.W."/>
            <person name="Graves T.A."/>
            <person name="Fulton R.S."/>
            <person name="Fulton L.A."/>
            <person name="Pepin K.H."/>
            <person name="Minx P."/>
            <person name="Wagner-McPherson C."/>
            <person name="Layman D."/>
            <person name="Wylie K."/>
            <person name="Sekhon M."/>
            <person name="Becker M.C."/>
            <person name="Fewell G.A."/>
            <person name="Delehaunty K.D."/>
            <person name="Miner T.L."/>
            <person name="Nash W.E."/>
            <person name="Kremitzki C."/>
            <person name="Oddy L."/>
            <person name="Du H."/>
            <person name="Sun H."/>
            <person name="Bradshaw-Cordum H."/>
            <person name="Ali J."/>
            <person name="Carter J."/>
            <person name="Cordes M."/>
            <person name="Harris A."/>
            <person name="Isak A."/>
            <person name="van Brunt A."/>
            <person name="Nguyen C."/>
            <person name="Du F."/>
            <person name="Courtney L."/>
            <person name="Kalicki J."/>
            <person name="Ozersky P."/>
            <person name="Abbott S."/>
            <person name="Armstrong J."/>
            <person name="Belter E.A."/>
            <person name="Caruso L."/>
            <person name="Cedroni M."/>
            <person name="Cotton M."/>
            <person name="Davidson T."/>
            <person name="Desai A."/>
            <person name="Elliott G."/>
            <person name="Erb T."/>
            <person name="Fronick C."/>
            <person name="Gaige T."/>
            <person name="Haakenson W."/>
            <person name="Haglund K."/>
            <person name="Holmes A."/>
            <person name="Harkins R."/>
            <person name="Kim K."/>
            <person name="Kruchowski S.S."/>
            <person name="Strong C.M."/>
            <person name="Grewal N."/>
            <person name="Goyea E."/>
            <person name="Hou S."/>
            <person name="Levy A."/>
            <person name="Martinka S."/>
            <person name="Mead K."/>
            <person name="McLellan M.D."/>
            <person name="Meyer R."/>
            <person name="Randall-Maher J."/>
            <person name="Tomlinson C."/>
            <person name="Dauphin-Kohlberg S."/>
            <person name="Kozlowicz-Reilly A."/>
            <person name="Shah N."/>
            <person name="Swearengen-Shahid S."/>
            <person name="Snider J."/>
            <person name="Strong J.T."/>
            <person name="Thompson J."/>
            <person name="Yoakum M."/>
            <person name="Leonard S."/>
            <person name="Pearman C."/>
            <person name="Trani L."/>
            <person name="Radionenko M."/>
            <person name="Waligorski J.E."/>
            <person name="Wang C."/>
            <person name="Rock S.M."/>
            <person name="Tin-Wollam A.-M."/>
            <person name="Maupin R."/>
            <person name="Latreille P."/>
            <person name="Wendl M.C."/>
            <person name="Yang S.-P."/>
            <person name="Pohl C."/>
            <person name="Wallis J.W."/>
            <person name="Spieth J."/>
            <person name="Bieri T.A."/>
            <person name="Berkowicz N."/>
            <person name="Nelson J.O."/>
            <person name="Osborne J."/>
            <person name="Ding L."/>
            <person name="Meyer R."/>
            <person name="Sabo A."/>
            <person name="Shotland Y."/>
            <person name="Sinha P."/>
            <person name="Wohldmann P.E."/>
            <person name="Cook L.L."/>
            <person name="Hickenbotham M.T."/>
            <person name="Eldred J."/>
            <person name="Williams D."/>
            <person name="Jones T.A."/>
            <person name="She X."/>
            <person name="Ciccarelli F.D."/>
            <person name="Izaurralde E."/>
            <person name="Taylor J."/>
            <person name="Schmutz J."/>
            <person name="Myers R.M."/>
            <person name="Cox D.R."/>
            <person name="Huang X."/>
            <person name="McPherson J.D."/>
            <person name="Mardis E.R."/>
            <person name="Clifton S.W."/>
            <person name="Warren W.C."/>
            <person name="Chinwalla A.T."/>
            <person name="Eddy S.R."/>
            <person name="Marra M.A."/>
            <person name="Ovcharenko I."/>
            <person name="Furey T.S."/>
            <person name="Miller W."/>
            <person name="Eichler E.E."/>
            <person name="Bork P."/>
            <person name="Suyama M."/>
            <person name="Torrents D."/>
            <person name="Waterston R.H."/>
            <person name="Wilson R.K."/>
        </authorList>
    </citation>
    <scope>NUCLEOTIDE SEQUENCE [LARGE SCALE GENOMIC DNA]</scope>
</reference>
<reference evidence="44 48" key="11">
    <citation type="submission" date="2005-09" db="EMBL/GenBank/DDBJ databases">
        <authorList>
            <person name="Mural R.J."/>
            <person name="Istrail S."/>
            <person name="Sutton G.G."/>
            <person name="Florea L."/>
            <person name="Halpern A.L."/>
            <person name="Mobarry C.M."/>
            <person name="Lippert R."/>
            <person name="Walenz B."/>
            <person name="Shatkay H."/>
            <person name="Dew I."/>
            <person name="Miller J.R."/>
            <person name="Flanigan M.J."/>
            <person name="Edwards N.J."/>
            <person name="Bolanos R."/>
            <person name="Fasulo D."/>
            <person name="Halldorsson B.V."/>
            <person name="Hannenhalli S."/>
            <person name="Turner R."/>
            <person name="Yooseph S."/>
            <person name="Lu F."/>
            <person name="Nusskern D.R."/>
            <person name="Shue B.C."/>
            <person name="Zheng X.H."/>
            <person name="Zhong F."/>
            <person name="Delcher A.L."/>
            <person name="Huson D.H."/>
            <person name="Kravitz S.A."/>
            <person name="Mouchard L."/>
            <person name="Reinert K."/>
            <person name="Remington K.A."/>
            <person name="Clark A.G."/>
            <person name="Waterman M.S."/>
            <person name="Eichler E.E."/>
            <person name="Adams M.D."/>
            <person name="Hunkapiller M.W."/>
            <person name="Myers E.W."/>
            <person name="Venter J.C."/>
        </authorList>
    </citation>
    <scope>NUCLEOTIDE SEQUENCE [LARGE SCALE GENOMIC DNA]</scope>
</reference>
<reference evidence="44 46" key="12">
    <citation type="journal article" date="2004" name="Genome Res.">
        <title>The status, quality, and expansion of the NIH full-length cDNA project: the Mammalian Gene Collection (MGC).</title>
        <authorList>
            <consortium name="The MGC Project Team"/>
        </authorList>
    </citation>
    <scope>NUCLEOTIDE SEQUENCE [LARGE SCALE MRNA] (ISOFORM ZAKBETA)</scope>
    <source>
        <tissue evidence="46">Colon</tissue>
    </source>
</reference>
<reference key="13">
    <citation type="journal article" date="2002" name="Biochem. Biophys. Res. Commun.">
        <title>Mixed lineage kinase ZAK utilizing MKK7 and not MKK4 to activate the c-Jun N-terminal kinase and playing a role in the cell arrest.</title>
        <authorList>
            <person name="Yang J.-J."/>
        </authorList>
    </citation>
    <scope>FUNCTION</scope>
    <scope>ACTIVITY REGULATION</scope>
    <scope>PHOSPHORYLATION</scope>
</reference>
<reference key="14">
    <citation type="journal article" date="2003" name="Biochem. Biophys. Res. Commun.">
        <title>A novel zinc finger protein, ZZaPK, interacts with ZAK and stimulates the ZAK-expressing cells re-entering the cell cycle.</title>
        <authorList>
            <person name="Yang J.-J."/>
        </authorList>
    </citation>
    <scope>INTERACTION WITH ZNF33A</scope>
</reference>
<reference key="15">
    <citation type="journal article" date="2003" name="Biochem. Biophys. Res. Commun.">
        <title>Effect of C-terminal truncations on MLK7 catalytic activity and JNK activation.</title>
        <authorList>
            <person name="Yu X."/>
            <person name="Bloem L.J."/>
        </authorList>
    </citation>
    <scope>FUNCTION</scope>
    <scope>CATALYTIC ACTIVITY</scope>
    <scope>BIOPHYSICOCHEMICAL PROPERTIES</scope>
</reference>
<reference evidence="44" key="16">
    <citation type="journal article" date="2003" name="J. Biochem.">
        <title>Regulation of a mitogen-activated protein kinase kinase kinase, MLTK by PKN.</title>
        <authorList>
            <person name="Takahashi M."/>
            <person name="Gotoh Y."/>
            <person name="Isagawa T."/>
            <person name="Nishimura T."/>
            <person name="Goyama E."/>
            <person name="Kim H.-S."/>
            <person name="Mukai H."/>
            <person name="Ono Y."/>
        </authorList>
    </citation>
    <scope>PHOSPHORYLATION</scope>
    <scope>ACTIVITY REGULATION</scope>
</reference>
<reference evidence="44" key="17">
    <citation type="journal article" date="2004" name="Cancer Res.">
        <title>A novel role for mixed-lineage kinase-like mitogen-activated protein triple kinase alpha in neoplastic cell transformation and tumor development.</title>
        <authorList>
            <person name="Cho Y.-Y."/>
            <person name="Bode A.M."/>
            <person name="Mizuno H."/>
            <person name="Choi B.Y."/>
            <person name="Choi H.S."/>
            <person name="Dong Z."/>
        </authorList>
    </citation>
    <scope>FUNCTION</scope>
</reference>
<reference evidence="44" key="18">
    <citation type="journal article" date="2004" name="J. Biol. Chem.">
        <title>The stress kinase MRK contributes to regulation of DNA damage checkpoints through a p38gamma-independent pathway.</title>
        <authorList>
            <person name="Tosti E."/>
            <person name="Waldbaum L."/>
            <person name="Warshaw G."/>
            <person name="Gross E.A."/>
            <person name="Ruggieri R."/>
        </authorList>
    </citation>
    <scope>FUNCTION IN DNA DAMAGE CHECKPOINTS</scope>
    <scope>FUNCTION IN PHOSPHORYLATION OF CHEK2</scope>
    <scope>ACTIVITY REGULATION</scope>
    <scope>PHOSPHORYLATION AT THR-161 AND SER-165</scope>
    <scope>MUTAGENESIS OF THR-161; THR-162 AND SER-165</scope>
</reference>
<reference key="19">
    <citation type="journal article" date="2004" name="J. Mol. Cell. Cardiol.">
        <title>Transgenic mice with cardiac-specific over-expression of MLK7 have increased mortality when exposed to chronic beta-adrenergic stimulation.</title>
        <authorList>
            <person name="Christe M."/>
            <person name="Jin N."/>
            <person name="Wang X."/>
            <person name="Gould K.E."/>
            <person name="Iversen P.W."/>
            <person name="Yu X."/>
            <person name="Lorenz J.N."/>
            <person name="Kadambi V."/>
            <person name="Zuckerman S.H."/>
            <person name="Bloem L.J."/>
        </authorList>
    </citation>
    <scope>FUNCTION</scope>
</reference>
<reference key="20">
    <citation type="journal article" date="2005" name="J. Biol. Chem.">
        <title>Phosphorylation of Ser28 in histone H3 mediated by mixed lineage kinase-like mitogen-activated protein triple kinase alpha.</title>
        <authorList>
            <person name="Choi H.S."/>
            <person name="Choi B.Y."/>
            <person name="Cho Y.-Y."/>
            <person name="Zhu F."/>
            <person name="Bode A.M."/>
            <person name="Dong Z."/>
        </authorList>
    </citation>
    <scope>FUNCTION IN PHOSPHORYLATION OF HISTONE H3 (ISOFORM 1)</scope>
    <scope>SUBCELLULAR LOCATION</scope>
</reference>
<reference key="21">
    <citation type="journal article" date="2005" name="J. Biol. Chem.">
        <title>Complete inhibition of anisomycin and UV radiation but not cytokine induced JNK and p38 activation by an aryl-substituted dihydropyrrolopyrazole quinoline and mixed lineage kinase 7 small interfering RNA.</title>
        <authorList>
            <person name="Wang X."/>
            <person name="Mader M.M."/>
            <person name="Toth J.E."/>
            <person name="Yu X."/>
            <person name="Jin N."/>
            <person name="Campbell R.M."/>
            <person name="Smallwood J.K."/>
            <person name="Christe M.E."/>
            <person name="Chatterjee A."/>
            <person name="Goodson T. Jr."/>
            <person name="Vlahos C.J."/>
            <person name="Matter W.F."/>
            <person name="Bloem L.J."/>
        </authorList>
    </citation>
    <scope>FUNCTION</scope>
</reference>
<reference key="22">
    <citation type="journal article" date="2008" name="Cell. Microbiol.">
        <title>ZAK: a MAP3Kinase that transduces Shiga toxin- and ricin-induced proinflammatory cytokine expression.</title>
        <authorList>
            <person name="Jandhyala D.M."/>
            <person name="Ahluwalia A."/>
            <person name="Obrig T."/>
            <person name="Thorpe C.M."/>
        </authorList>
    </citation>
    <scope>FUNCTION</scope>
</reference>
<reference key="23">
    <citation type="journal article" date="2008" name="Mol. Cell">
        <title>Kinase-selective enrichment enables quantitative phosphoproteomics of the kinome across the cell cycle.</title>
        <authorList>
            <person name="Daub H."/>
            <person name="Olsen J.V."/>
            <person name="Bairlein M."/>
            <person name="Gnad F."/>
            <person name="Oppermann F.S."/>
            <person name="Korner R."/>
            <person name="Greff Z."/>
            <person name="Keri G."/>
            <person name="Stemmann O."/>
            <person name="Mann M."/>
        </authorList>
    </citation>
    <scope>PHOSPHORYLATION [LARGE SCALE ANALYSIS] AT SER-275; SER-302; THR-628; SER-727 AND SER-733</scope>
    <scope>PHOSPHORYLATION [LARGE SCALE ANALYSIS] AT SER-339; SER-434 AND SER-454 (ISOFORM 2)</scope>
    <scope>IDENTIFICATION BY MASS SPECTROMETRY [LARGE SCALE ANALYSIS]</scope>
    <source>
        <tissue>Cervix carcinoma</tissue>
    </source>
</reference>
<reference key="24">
    <citation type="journal article" date="2008" name="Proc. Natl. Acad. Sci. U.S.A.">
        <title>A quantitative atlas of mitotic phosphorylation.</title>
        <authorList>
            <person name="Dephoure N."/>
            <person name="Zhou C."/>
            <person name="Villen J."/>
            <person name="Beausoleil S.A."/>
            <person name="Bakalarski C.E."/>
            <person name="Elledge S.J."/>
            <person name="Gygi S.P."/>
        </authorList>
    </citation>
    <scope>PHOSPHORYLATION [LARGE SCALE ANALYSIS] AT SER-599; THR-628; SER-633; SER-727 AND SER-733</scope>
    <scope>PHOSPHORYLATION [LARGE SCALE ANALYSIS] AT SER-454 (ISOFORM 2)</scope>
    <scope>IDENTIFICATION BY MASS SPECTROMETRY [LARGE SCALE ANALYSIS]</scope>
    <source>
        <tissue>Cervix carcinoma</tissue>
    </source>
</reference>
<reference key="25">
    <citation type="journal article" date="2009" name="Anal. Chem.">
        <title>Lys-N and trypsin cover complementary parts of the phosphoproteome in a refined SCX-based approach.</title>
        <authorList>
            <person name="Gauci S."/>
            <person name="Helbig A.O."/>
            <person name="Slijper M."/>
            <person name="Krijgsveld J."/>
            <person name="Heck A.J."/>
            <person name="Mohammed S."/>
        </authorList>
    </citation>
    <scope>IDENTIFICATION BY MASS SPECTROMETRY [LARGE SCALE ANALYSIS]</scope>
</reference>
<reference key="26">
    <citation type="journal article" date="2009" name="Mol. Cell. Proteomics">
        <title>Large-scale proteomics analysis of the human kinome.</title>
        <authorList>
            <person name="Oppermann F.S."/>
            <person name="Gnad F."/>
            <person name="Olsen J.V."/>
            <person name="Hornberger R."/>
            <person name="Greff Z."/>
            <person name="Keri G."/>
            <person name="Mann M."/>
            <person name="Daub H."/>
        </authorList>
    </citation>
    <scope>ACETYLATION [LARGE SCALE ANALYSIS] AT SER-2</scope>
    <scope>PHOSPHORYLATION [LARGE SCALE ANALYSIS] AT SER-275; THR-628; SER-633 AND SER-727</scope>
    <scope>PHOSPHORYLATION [LARGE SCALE ANALYSIS] AT SER-339; SER-434 AND SER-454 (ISOFORM 2)</scope>
    <scope>CLEAVAGE OF INITIATOR METHIONINE [LARGE SCALE ANALYSIS]</scope>
    <scope>IDENTIFICATION BY MASS SPECTROMETRY [LARGE SCALE ANALYSIS]</scope>
</reference>
<reference key="27">
    <citation type="journal article" date="2009" name="Sci. Signal.">
        <title>Quantitative phosphoproteomic analysis of T cell receptor signaling reveals system-wide modulation of protein-protein interactions.</title>
        <authorList>
            <person name="Mayya V."/>
            <person name="Lundgren D.H."/>
            <person name="Hwang S.-I."/>
            <person name="Rezaul K."/>
            <person name="Wu L."/>
            <person name="Eng J.K."/>
            <person name="Rodionov V."/>
            <person name="Han D.K."/>
        </authorList>
    </citation>
    <scope>PHOSPHORYLATION [LARGE SCALE ANALYSIS] AT SER-633</scope>
    <scope>IDENTIFICATION BY MASS SPECTROMETRY [LARGE SCALE ANALYSIS]</scope>
    <source>
        <tissue>Leukemic T-cell</tissue>
    </source>
</reference>
<reference key="28">
    <citation type="journal article" date="2010" name="Cancer Biol. Ther.">
        <title>ZAK is required for doxorubicin, a novel ribotoxic stressor, to induce SAPK activation and apoptosis in HaCaT cells.</title>
        <authorList>
            <person name="Sauter K.A."/>
            <person name="Magun E.A."/>
            <person name="Iordanov M.S."/>
            <person name="Magun B.E."/>
        </authorList>
    </citation>
    <scope>FUNCTION</scope>
</reference>
<reference key="29">
    <citation type="journal article" date="2010" name="Sci. Signal.">
        <title>Quantitative phosphoproteomics reveals widespread full phosphorylation site occupancy during mitosis.</title>
        <authorList>
            <person name="Olsen J.V."/>
            <person name="Vermeulen M."/>
            <person name="Santamaria A."/>
            <person name="Kumar C."/>
            <person name="Miller M.L."/>
            <person name="Jensen L.J."/>
            <person name="Gnad F."/>
            <person name="Cox J."/>
            <person name="Jensen T.S."/>
            <person name="Nigg E.A."/>
            <person name="Brunak S."/>
            <person name="Mann M."/>
        </authorList>
    </citation>
    <scope>PHOSPHORYLATION [LARGE SCALE ANALYSIS] AT SER-727</scope>
    <scope>IDENTIFICATION BY MASS SPECTROMETRY [LARGE SCALE ANALYSIS]</scope>
    <source>
        <tissue>Cervix carcinoma</tissue>
    </source>
</reference>
<reference key="30">
    <citation type="journal article" date="2011" name="BMC Syst. Biol.">
        <title>Initial characterization of the human central proteome.</title>
        <authorList>
            <person name="Burkard T.R."/>
            <person name="Planyavsky M."/>
            <person name="Kaupe I."/>
            <person name="Breitwieser F.P."/>
            <person name="Buerckstuemmer T."/>
            <person name="Bennett K.L."/>
            <person name="Superti-Furga G."/>
            <person name="Colinge J."/>
        </authorList>
    </citation>
    <scope>IDENTIFICATION BY MASS SPECTROMETRY [LARGE SCALE ANALYSIS]</scope>
</reference>
<reference key="31">
    <citation type="journal article" date="2011" name="J. Biol. Chem.">
        <title>A-kinase anchoring protein (AKAP)-Lbc anchors a PKN-based signaling complex involved in alpha1-adrenergic receptor-induced p38 activation.</title>
        <authorList>
            <person name="Cariolato L."/>
            <person name="Cavin S."/>
            <person name="Diviani D."/>
        </authorList>
    </citation>
    <scope>FUNCTION</scope>
    <scope>IDENTIFICATION IN A COMPLEX WITH AKAP13; PKN1; MAPK14 AND MAP2K3</scope>
</reference>
<reference key="32">
    <citation type="journal article" date="2011" name="Sci. Signal.">
        <title>System-wide temporal characterization of the proteome and phosphoproteome of human embryonic stem cell differentiation.</title>
        <authorList>
            <person name="Rigbolt K.T."/>
            <person name="Prokhorova T.A."/>
            <person name="Akimov V."/>
            <person name="Henningsen J."/>
            <person name="Johansen P.T."/>
            <person name="Kratchmarova I."/>
            <person name="Kassem M."/>
            <person name="Mann M."/>
            <person name="Olsen J.V."/>
            <person name="Blagoev B."/>
        </authorList>
    </citation>
    <scope>IDENTIFICATION BY MASS SPECTROMETRY [LARGE SCALE ANALYSIS]</scope>
</reference>
<reference key="33">
    <citation type="journal article" date="2012" name="Mol. Cell. Proteomics">
        <title>Comparative large-scale characterisation of plant vs. mammal proteins reveals similar and idiosyncratic N-alpha acetylation features.</title>
        <authorList>
            <person name="Bienvenut W.V."/>
            <person name="Sumpton D."/>
            <person name="Martinez A."/>
            <person name="Lilla S."/>
            <person name="Espagne C."/>
            <person name="Meinnel T."/>
            <person name="Giglione C."/>
        </authorList>
    </citation>
    <scope>ACETYLATION [LARGE SCALE ANALYSIS] AT SER-2</scope>
    <scope>CLEAVAGE OF INITIATOR METHIONINE [LARGE SCALE ANALYSIS]</scope>
    <scope>IDENTIFICATION BY MASS SPECTROMETRY [LARGE SCALE ANALYSIS]</scope>
</reference>
<reference key="34">
    <citation type="journal article" date="2013" name="J. Proteome Res.">
        <title>Toward a comprehensive characterization of a human cancer cell phosphoproteome.</title>
        <authorList>
            <person name="Zhou H."/>
            <person name="Di Palma S."/>
            <person name="Preisinger C."/>
            <person name="Peng M."/>
            <person name="Polat A.N."/>
            <person name="Heck A.J."/>
            <person name="Mohammed S."/>
        </authorList>
    </citation>
    <scope>PHOSPHORYLATION [LARGE SCALE ANALYSIS] AT SER-567; SER-593; THR-628; SER-633; SER-637; SER-648; SER-649; SER-685; SER-727 AND SER-733</scope>
    <scope>IDENTIFICATION BY MASS SPECTROMETRY [LARGE SCALE ANALYSIS]</scope>
    <source>
        <tissue>Cervix carcinoma</tissue>
        <tissue>Erythroleukemia</tissue>
    </source>
</reference>
<reference key="35">
    <citation type="journal article" date="2014" name="J. Proteomics">
        <title>An enzyme assisted RP-RPLC approach for in-depth analysis of human liver phosphoproteome.</title>
        <authorList>
            <person name="Bian Y."/>
            <person name="Song C."/>
            <person name="Cheng K."/>
            <person name="Dong M."/>
            <person name="Wang F."/>
            <person name="Huang J."/>
            <person name="Sun D."/>
            <person name="Wang L."/>
            <person name="Ye M."/>
            <person name="Zou H."/>
        </authorList>
    </citation>
    <scope>PHOSPHORYLATION [LARGE SCALE ANALYSIS] AT SER-727</scope>
    <scope>IDENTIFICATION BY MASS SPECTROMETRY [LARGE SCALE ANALYSIS]</scope>
    <source>
        <tissue>Liver</tissue>
    </source>
</reference>
<reference key="36">
    <citation type="journal article" date="2016" name="Cell Biochem. Funct.">
        <title>ZAKbeta antagonizes and ameliorates the cardiac hypertrophic and apoptotic effects induced by ZAKalpha.</title>
        <authorList>
            <person name="Fu C.Y."/>
            <person name="Kuo W.W."/>
            <person name="Ho T.J."/>
            <person name="Wen S.Y."/>
            <person name="Lin L.C."/>
            <person name="Tseng Y.S."/>
            <person name="Hung H.C."/>
            <person name="Viswanadha V.P."/>
            <person name="Yang J.J."/>
            <person name="Huang C.Y."/>
        </authorList>
    </citation>
    <scope>FUNCTION (ISOFORMS ZAKALPHA AND ZAKBETA)</scope>
    <scope>SUBUNIT</scope>
</reference>
<reference key="37">
    <citation type="journal article" date="2020" name="Cell">
        <title>Ribosome collisions trigger general stress responses to regulate cell fate.</title>
        <authorList>
            <person name="Wu C.C."/>
            <person name="Peterson A."/>
            <person name="Zinshteyn B."/>
            <person name="Regot S."/>
            <person name="Green R."/>
        </authorList>
    </citation>
    <scope>FUNCTION</scope>
    <scope>CATALYTIC ACTIVITY</scope>
    <scope>ACTIVITY REGULATION</scope>
    <scope>INTERACTION WITH EIF2AK4</scope>
    <scope>AUTOPHOSPHORYLATION</scope>
    <scope>MUTAGENESIS OF LYS-45</scope>
</reference>
<reference key="38">
    <citation type="journal article" date="2020" name="Mol. Cell">
        <title>ZAKalpha recognizes stalled ribosomes through partially redundant sensor domains.</title>
        <authorList>
            <person name="Vind A.C."/>
            <person name="Snieckute G."/>
            <person name="Blasius M."/>
            <person name="Tiedje C."/>
            <person name="Krogh N."/>
            <person name="Bekker-Jensen D.B."/>
            <person name="Andersen K.L."/>
            <person name="Nordgaard C."/>
            <person name="Tollenaere M.A.X."/>
            <person name="Lund A.H."/>
            <person name="Olsen J.V."/>
            <person name="Nielsen H."/>
            <person name="Bekker-Jensen S."/>
        </authorList>
    </citation>
    <scope>FUNCTION</scope>
    <scope>CATALYTIC ACTIVITY</scope>
    <scope>ACTIVITY REGULATION</scope>
    <scope>AUTOPHOSPHORYLATION</scope>
    <scope>PHOSPHORYLATION AT SER-2; SER-3; SER-7; SER-302; THR-586; SER-587; SER-649; SER-660; THR-664; SER-718; SER-720 AND THR-742</scope>
    <scope>MUTAGENESIS OF SER-657 AND 752-THR--SER-761</scope>
</reference>
<reference key="39">
    <citation type="journal article" date="2022" name="Science">
        <title>ZAKalpha-driven ribotoxic stress response activates the human NLRP1 inflammasome.</title>
        <authorList>
            <person name="Robinson K.S."/>
            <person name="Toh G.A."/>
            <person name="Rozario P."/>
            <person name="Chua R."/>
            <person name="Bauernfried S."/>
            <person name="Sun Z."/>
            <person name="Firdaus M.J."/>
            <person name="Bayat S."/>
            <person name="Nadkarni R."/>
            <person name="Poh Z.S."/>
            <person name="Tham K.C."/>
            <person name="Harapas C.R."/>
            <person name="Lim C.K."/>
            <person name="Chu W."/>
            <person name="Tay C.W.S."/>
            <person name="Tan K.Y."/>
            <person name="Zhao T."/>
            <person name="Bonnard C."/>
            <person name="Sobota R."/>
            <person name="Connolly J.E."/>
            <person name="Common J."/>
            <person name="Masters S.L."/>
            <person name="Chen K.W."/>
            <person name="Ho L."/>
            <person name="Wu B."/>
            <person name="Hornung V."/>
            <person name="Zhong F.L."/>
        </authorList>
    </citation>
    <scope>FUNCTION</scope>
    <scope>CATALYTIC ACTIVITY</scope>
    <scope>MUTAGENESIS OF LYS-45</scope>
</reference>
<reference evidence="51" key="40">
    <citation type="journal article" date="2016" name="ACS Chem. Biol.">
        <title>Structure of the Human Protein Kinase ZAK in Complex with Vemurafenib.</title>
        <authorList>
            <person name="Mathea S."/>
            <person name="Abdul Azeez K.R."/>
            <person name="Salah E."/>
            <person name="Tallant C."/>
            <person name="Wolfreys F."/>
            <person name="Konietzny R."/>
            <person name="Fischer R."/>
            <person name="Lou H.J."/>
            <person name="Brennan P.E."/>
            <person name="Schnapp G."/>
            <person name="Pautsch A."/>
            <person name="Kessler B.M."/>
            <person name="Turk B.E."/>
            <person name="Knapp S."/>
        </authorList>
    </citation>
    <scope>X-RAY CRYSTALLOGRAPHY (2.14 ANGSTROMS) OF 5-309 IN COMPLEX WITH VEMURAFENIB</scope>
    <scope>FUNCTION</scope>
    <scope>CATALYTIC ACTIVITY</scope>
    <scope>ACTIVITY REGULATION</scope>
    <scope>PHOSPHORYLATION AT THR-161 AND SER-165</scope>
</reference>
<reference evidence="52" key="41">
    <citation type="journal article" date="2017" name="J. Med. Chem.">
        <title>Structure Based Design of N-(3-((1H-Pyrazolo[3,4-b]pyridin-5-yl)ethynyl)benzenesulfonamides as Selective Leucine-Zipper and Sterile-alpha Motif Kinase (ZAK) Inhibitors.</title>
        <authorList>
            <person name="Chang Y."/>
            <person name="Lu X."/>
            <person name="Shibu M.A."/>
            <person name="Dai Y.B."/>
            <person name="Luo J."/>
            <person name="Zhang Y."/>
            <person name="Li Y."/>
            <person name="Zhao P."/>
            <person name="Zhang Z."/>
            <person name="Xu Y."/>
            <person name="Tu Z.C."/>
            <person name="Zhang Q.W."/>
            <person name="Yun C.H."/>
            <person name="Huang C.Y."/>
            <person name="Ding K."/>
        </authorList>
    </citation>
    <scope>X-RAY CRYSTALLOGRAPHY (1.87 ANGSTROMS) OF 5-309 IN COMPLEX WITH COMPOUND 3H</scope>
    <scope>ACTIVITY REGULATION</scope>
</reference>
<reference evidence="53 54" key="42">
    <citation type="journal article" date="2020" name="J. Med. Chem.">
        <title>Design, Synthesis, and Structure-Activity Relationships of 1,2,3-Triazole Benzenesulfonamides as New Selective Leucine-Zipper and Sterile-alpha Motif Kinase (ZAK) Inhibitors.</title>
        <authorList>
            <person name="Yang J."/>
            <person name="Shibu M.A."/>
            <person name="Kong L."/>
            <person name="Luo J."/>
            <person name="BadrealamKhan F."/>
            <person name="Huang Y."/>
            <person name="Tu Z.C."/>
            <person name="Yun C.H."/>
            <person name="Huang C.Y."/>
            <person name="Ding K."/>
            <person name="Lu X."/>
        </authorList>
    </citation>
    <scope>X-RAY CRYSTALLOGRAPHY (1.90 ANGSTROMS) OF 5-309 IN COMPLEX WITH 1,2,3-TRIAZOLE BENZENESULFONAMIDES INHOBITORS</scope>
    <scope>ACTIVITY REGULATION</scope>
</reference>
<reference key="43">
    <citation type="journal article" date="2007" name="Nature">
        <title>Patterns of somatic mutation in human cancer genomes.</title>
        <authorList>
            <person name="Greenman C."/>
            <person name="Stephens P."/>
            <person name="Smith R."/>
            <person name="Dalgliesh G.L."/>
            <person name="Hunter C."/>
            <person name="Bignell G."/>
            <person name="Davies H."/>
            <person name="Teague J."/>
            <person name="Butler A."/>
            <person name="Stevens C."/>
            <person name="Edkins S."/>
            <person name="O'Meara S."/>
            <person name="Vastrik I."/>
            <person name="Schmidt E.E."/>
            <person name="Avis T."/>
            <person name="Barthorpe S."/>
            <person name="Bhamra G."/>
            <person name="Buck G."/>
            <person name="Choudhury B."/>
            <person name="Clements J."/>
            <person name="Cole J."/>
            <person name="Dicks E."/>
            <person name="Forbes S."/>
            <person name="Gray K."/>
            <person name="Halliday K."/>
            <person name="Harrison R."/>
            <person name="Hills K."/>
            <person name="Hinton J."/>
            <person name="Jenkinson A."/>
            <person name="Jones D."/>
            <person name="Menzies A."/>
            <person name="Mironenko T."/>
            <person name="Perry J."/>
            <person name="Raine K."/>
            <person name="Richardson D."/>
            <person name="Shepherd R."/>
            <person name="Small A."/>
            <person name="Tofts C."/>
            <person name="Varian J."/>
            <person name="Webb T."/>
            <person name="West S."/>
            <person name="Widaa S."/>
            <person name="Yates A."/>
            <person name="Cahill D.P."/>
            <person name="Louis D.N."/>
            <person name="Goldstraw P."/>
            <person name="Nicholson A.G."/>
            <person name="Brasseur F."/>
            <person name="Looijenga L."/>
            <person name="Weber B.L."/>
            <person name="Chiew Y.-E."/>
            <person name="DeFazio A."/>
            <person name="Greaves M.F."/>
            <person name="Green A.R."/>
            <person name="Campbell P."/>
            <person name="Birney E."/>
            <person name="Easton D.F."/>
            <person name="Chenevix-Trench G."/>
            <person name="Tan M.-H."/>
            <person name="Khoo S.K."/>
            <person name="Teh B.T."/>
            <person name="Yuen S.T."/>
            <person name="Leung S.Y."/>
            <person name="Wooster R."/>
            <person name="Futreal P.A."/>
            <person name="Stratton M.R."/>
        </authorList>
    </citation>
    <scope>VARIANTS [LARGE SCALE ANALYSIS] MET-267; THR-281; VAL-281; LEU-531; TRP-580; THR-740; HIS-773 AND THR-784</scope>
</reference>
<reference key="44">
    <citation type="journal article" date="2016" name="Genome Res.">
        <title>Exome sequencing and CRISPR/Cas genome editing identify mutations of ZAK as a cause of limb defects in humans and mice.</title>
        <authorList>
            <person name="Spielmann M."/>
            <person name="Kakar N."/>
            <person name="Tayebi N."/>
            <person name="Leettola C."/>
            <person name="Nuernberg G."/>
            <person name="Sowada N."/>
            <person name="Lupianez D.G."/>
            <person name="Harabula I."/>
            <person name="Floettmann R."/>
            <person name="Horn D."/>
            <person name="Chan W.L."/>
            <person name="Wittler L."/>
            <person name="Yilmaz R."/>
            <person name="Altmueller J."/>
            <person name="Thiele H."/>
            <person name="van Bokhoven H."/>
            <person name="Schwartz C.E."/>
            <person name="Nuernberg P."/>
            <person name="Bowie J.U."/>
            <person name="Ahmad J."/>
            <person name="Kubisch C."/>
            <person name="Mundlos S."/>
            <person name="Borck G."/>
        </authorList>
    </citation>
    <scope>INVOLVEMENT IN SFMMP</scope>
    <scope>SUBUNIT</scope>
    <scope>VARIANT SFMMP CYS-368</scope>
    <scope>CHARACTERIZATION OF VARIANT SFMMP CYS-368</scope>
</reference>
<reference key="45">
    <citation type="journal article" date="2017" name="Brain">
        <title>Recessive mutations in the kinase ZAK cause a congenital myopathy with fibre type disproportion.</title>
        <authorList>
            <person name="Vasli N."/>
            <person name="Harris E."/>
            <person name="Karamchandani J."/>
            <person name="Bareke E."/>
            <person name="Majewski J."/>
            <person name="Romero N.B."/>
            <person name="Stojkovic T."/>
            <person name="Barresi R."/>
            <person name="Tasfaout H."/>
            <person name="Charlton R."/>
            <person name="Malfatti E."/>
            <person name="Bohm J."/>
            <person name="Marini-Bettolo C."/>
            <person name="Choquet K."/>
            <person name="Dicaire M.J."/>
            <person name="Shao Y.H."/>
            <person name="Topf A."/>
            <person name="O'Ferrall E."/>
            <person name="Eymard B."/>
            <person name="Straub V."/>
            <person name="Blanco G."/>
            <person name="Lochmueller H."/>
            <person name="Brais B."/>
            <person name="Laporte J."/>
            <person name="Tetreault M."/>
        </authorList>
    </citation>
    <scope>INVOLVEMENT IN CNM6</scope>
    <scope>VARIANTS CNM6 95-ASN--PHE-800 DEL AND 172-TRP--PHE-800 DEL</scope>
    <scope>CHARACTERIZATION OF VARIANTS CNM6 95-ASN--PHE-800 DEL AND 172-TRP--PHE-800 DEL</scope>
</reference>
<reference key="46">
    <citation type="journal article" date="2019" name="Genet. Med.">
        <title>Autozygome and high throughput confirmation of disease genes candidacy.</title>
        <authorList>
            <person name="Maddirevula S."/>
            <person name="Alzahrani F."/>
            <person name="Al-Owain M."/>
            <person name="Al Muhaizea M.A."/>
            <person name="Kayyali H.R."/>
            <person name="AlHashem A."/>
            <person name="Rahbeeni Z."/>
            <person name="Al-Otaibi M."/>
            <person name="Alzaidan H.I."/>
            <person name="Balobaid A."/>
            <person name="El Khashab H.Y."/>
            <person name="Bubshait D.K."/>
            <person name="Faden M."/>
            <person name="Yamani S.A."/>
            <person name="Dabbagh O."/>
            <person name="Al-Mureikhi M."/>
            <person name="Jasser A.A."/>
            <person name="Alsaif H.S."/>
            <person name="Alluhaydan I."/>
            <person name="Seidahmed M.Z."/>
            <person name="Alabbasi B.H."/>
            <person name="Almogarri I."/>
            <person name="Kurdi W."/>
            <person name="Akleh H."/>
            <person name="Qari A."/>
            <person name="Al Tala S.M."/>
            <person name="Alhomaidi S."/>
            <person name="Kentab A.Y."/>
            <person name="Salih M.A."/>
            <person name="Chedrawi A."/>
            <person name="Alameer S."/>
            <person name="Tabarki B."/>
            <person name="Shamseldin H.E."/>
            <person name="Patel N."/>
            <person name="Ibrahim N."/>
            <person name="Abdulwahab F."/>
            <person name="Samira M."/>
            <person name="Goljan E."/>
            <person name="Abouelhoda M."/>
            <person name="Meyer B.F."/>
            <person name="Hashem M."/>
            <person name="Shaheen R."/>
            <person name="AlShahwan S."/>
            <person name="Alfadhel M."/>
            <person name="Ben-Omran T."/>
            <person name="Al-Qattan M.M."/>
            <person name="Monies D."/>
            <person name="Alkuraya F.S."/>
        </authorList>
    </citation>
    <scope>VARIANT CNM6 TRP-250</scope>
</reference>
<reference key="47">
    <citation type="journal article" date="2020" name="J. Int. Med. Res.">
        <title>Rare missense variant p.Ala505Ser in the ZAK protein observed in a patient with split-hand/foot malformation from a non-consanguineous pedigree.</title>
        <authorList>
            <person name="Funk C.R."/>
            <person name="Huey E.S."/>
            <person name="May M.M."/>
            <person name="Peng Y."/>
            <person name="Michonova E."/>
            <person name="Best R.G."/>
            <person name="Schwartz C.E."/>
            <person name="Blenda A.V."/>
        </authorList>
    </citation>
    <scope>VARIANT SFMMP SER-505</scope>
    <scope>CHARACTERIZATION OF VARIANT SFMMP SER-505</scope>
</reference>
<accession>Q9NYL2</accession>
<accession>B3KPG2</accession>
<accession>Q53SX1</accession>
<accession>Q580W8</accession>
<accession>Q59GY5</accession>
<accession>Q86YW8</accession>
<accession>Q9HCC4</accession>
<accession>Q9HCC5</accession>
<accession>Q9HDD2</accession>
<accession>Q9NYE9</accession>
<name>M3K20_HUMAN</name>
<feature type="initiator methionine" description="Removed" evidence="57 60">
    <location>
        <position position="1"/>
    </location>
</feature>
<feature type="chain" id="PRO_0000086338" description="Mitogen-activated protein kinase kinase kinase 20">
    <location>
        <begin position="2"/>
        <end position="800"/>
    </location>
</feature>
<feature type="domain" description="Protein kinase" evidence="2">
    <location>
        <begin position="16"/>
        <end position="277"/>
    </location>
</feature>
<feature type="domain" description="SAM" evidence="3">
    <location>
        <begin position="339"/>
        <end position="410"/>
    </location>
</feature>
<feature type="region of interest" description="Leucine-zipper">
    <location>
        <begin position="287"/>
        <end position="308"/>
    </location>
</feature>
<feature type="region of interest" description="Disordered" evidence="5">
    <location>
        <begin position="652"/>
        <end position="800"/>
    </location>
</feature>
<feature type="region of interest" description="Sensing domain (S)" evidence="30">
    <location>
        <begin position="670"/>
        <end position="713"/>
    </location>
</feature>
<feature type="region of interest" description="C-terminal domain (CTD)" evidence="30">
    <location>
        <begin position="774"/>
        <end position="800"/>
    </location>
</feature>
<feature type="compositionally biased region" description="Polar residues" evidence="5">
    <location>
        <begin position="652"/>
        <end position="666"/>
    </location>
</feature>
<feature type="compositionally biased region" description="Basic and acidic residues" evidence="5">
    <location>
        <begin position="667"/>
        <end position="678"/>
    </location>
</feature>
<feature type="compositionally biased region" description="Polar residues" evidence="5">
    <location>
        <begin position="686"/>
        <end position="706"/>
    </location>
</feature>
<feature type="compositionally biased region" description="Polar residues" evidence="5">
    <location>
        <begin position="717"/>
        <end position="726"/>
    </location>
</feature>
<feature type="compositionally biased region" description="Basic and acidic residues" evidence="5">
    <location>
        <begin position="728"/>
        <end position="738"/>
    </location>
</feature>
<feature type="compositionally biased region" description="Basic and acidic residues" evidence="5">
    <location>
        <begin position="750"/>
        <end position="763"/>
    </location>
</feature>
<feature type="compositionally biased region" description="Basic and acidic residues" evidence="5">
    <location>
        <begin position="785"/>
        <end position="800"/>
    </location>
</feature>
<feature type="active site" description="Proton acceptor" evidence="1 2 4">
    <location>
        <position position="133"/>
    </location>
</feature>
<feature type="binding site" evidence="1 2">
    <location>
        <begin position="22"/>
        <end position="30"/>
    </location>
    <ligand>
        <name>ATP</name>
        <dbReference type="ChEBI" id="CHEBI:30616"/>
    </ligand>
</feature>
<feature type="binding site" evidence="2 8">
    <location>
        <position position="45"/>
    </location>
    <ligand>
        <name>ATP</name>
        <dbReference type="ChEBI" id="CHEBI:30616"/>
    </ligand>
</feature>
<feature type="modified residue" description="N-acetylserine" evidence="57 60">
    <location>
        <position position="2"/>
    </location>
</feature>
<feature type="modified residue" description="Phosphoserine; by autocatalysis" evidence="30">
    <location>
        <position position="2"/>
    </location>
</feature>
<feature type="modified residue" description="Phosphoserine; by autocatalysis" evidence="30">
    <location>
        <position position="3"/>
    </location>
</feature>
<feature type="modified residue" description="Phosphoserine; by autocatalysis" evidence="30">
    <location>
        <position position="7"/>
    </location>
</feature>
<feature type="modified residue" description="Phosphothreonine; by autocatalysis" evidence="14 23">
    <location>
        <position position="161"/>
    </location>
</feature>
<feature type="modified residue" description="Phosphoserine; by autocatalysis" evidence="14 23">
    <location>
        <position position="165"/>
    </location>
</feature>
<feature type="modified residue" description="Phosphoserine" evidence="56 57">
    <location>
        <position position="275"/>
    </location>
</feature>
<feature type="modified residue" description="Phosphoserine; by autocatalysis" evidence="30 56">
    <location>
        <position position="302"/>
    </location>
</feature>
<feature type="modified residue" description="Phosphoserine" evidence="61">
    <location>
        <position position="567"/>
    </location>
</feature>
<feature type="modified residue" description="Phosphothreonine; by autocatalysis" evidence="30">
    <location>
        <position position="586"/>
    </location>
</feature>
<feature type="modified residue" description="Phosphoserine; by autocatalysis" evidence="30">
    <location>
        <position position="587"/>
    </location>
</feature>
<feature type="modified residue" description="Phosphoserine" evidence="61">
    <location>
        <position position="593"/>
    </location>
</feature>
<feature type="modified residue" description="Phosphoserine" evidence="55">
    <location>
        <position position="599"/>
    </location>
</feature>
<feature type="modified residue" description="Phosphothreonine" evidence="55 56 57 61">
    <location>
        <position position="628"/>
    </location>
</feature>
<feature type="modified residue" description="Phosphoserine" evidence="55 57 58 61">
    <location>
        <position position="633"/>
    </location>
</feature>
<feature type="modified residue" description="Phosphoserine" evidence="61">
    <location>
        <position position="637"/>
    </location>
</feature>
<feature type="modified residue" description="Phosphoserine" evidence="61">
    <location>
        <position position="648"/>
    </location>
</feature>
<feature type="modified residue" description="Phosphoserine; by autocatalysis" evidence="30 61">
    <location>
        <position position="649"/>
    </location>
</feature>
<feature type="modified residue" description="Phosphoserine; by autocatalysis" evidence="30">
    <location>
        <position position="660"/>
    </location>
</feature>
<feature type="modified residue" description="Phosphothreonine; by autocatalysis" evidence="30">
    <location>
        <position position="664"/>
    </location>
</feature>
<feature type="modified residue" description="Phosphoserine" evidence="61">
    <location>
        <position position="685"/>
    </location>
</feature>
<feature type="modified residue" description="Phosphoserine; by autocatalysis" evidence="30">
    <location>
        <position position="718"/>
    </location>
</feature>
<feature type="modified residue" description="Phosphoserine; by autocatalysis" evidence="30">
    <location>
        <position position="720"/>
    </location>
</feature>
<feature type="modified residue" description="Phosphoserine" evidence="55 56 57 59 61 62">
    <location>
        <position position="727"/>
    </location>
</feature>
<feature type="modified residue" description="Phosphoserine" evidence="55 56 61">
    <location>
        <position position="733"/>
    </location>
</feature>
<feature type="modified residue" description="Phosphothreonine; by autocatalysis" evidence="30">
    <location>
        <position position="742"/>
    </location>
</feature>
<feature type="splice variant" id="VSP_051741" description="In isoform 3." evidence="43">
    <original>CEIEATLERLKKLERDLSFKEQELKERE</original>
    <variation>WVAPTAGHSVWLSKTITRLNEEVNQRSE</variation>
    <location>
        <begin position="285"/>
        <end position="312"/>
    </location>
</feature>
<feature type="splice variant" id="VSP_051742" description="In isoform 3." evidence="43">
    <location>
        <begin position="313"/>
        <end position="800"/>
    </location>
</feature>
<feature type="splice variant" id="VSP_051743" description="In isoform ZAKbeta." evidence="36 37 38 39 40">
    <original>PSFEIGAWTEDDVYCWVQQLVRKGDSSAEMSVYASLFKENNITGKRLLLLEEEDLKDMGIVSKGHIIHFKSAIEKLTHDYINLFHFPPLIKDSGGEPEENEEKIVNLELVFGFHLKPGTGPQDC</original>
    <variation>LPLAARMSEESYFESKTEESNSAEMSCQITATSNGEGHGMNPSLQAMMLMGFGDIFSMNKAGAVMHSGMQINMQAKQNSSKTTSKRRGKKVNMALGFSDFDLSEGDDDDDDDGEEEDNDMDNSE</variation>
    <location>
        <begin position="332"/>
        <end position="455"/>
    </location>
</feature>
<feature type="splice variant" id="VSP_051744" description="In isoform ZAKbeta." evidence="36 37 38 39 40">
    <location>
        <begin position="456"/>
        <end position="800"/>
    </location>
</feature>
<feature type="sequence variant" id="VAR_080563" description="In CNM6; decrease of protein abundance." evidence="24">
    <location>
        <begin position="95"/>
        <end position="800"/>
    </location>
</feature>
<feature type="sequence variant" id="VAR_080564" description="In CNM6; decrease of protein abundance." evidence="24">
    <location>
        <begin position="172"/>
        <end position="800"/>
    </location>
</feature>
<feature type="sequence variant" id="VAR_082158" description="In CNM6; uncertain significance; dbSNP:rs763481300." evidence="27">
    <original>R</original>
    <variation>W</variation>
    <location>
        <position position="250"/>
    </location>
</feature>
<feature type="sequence variant" id="VAR_040806" description="In dbSNP:rs6758025." evidence="18">
    <original>T</original>
    <variation>M</variation>
    <location>
        <position position="267"/>
    </location>
</feature>
<feature type="sequence variant" id="VAR_040807" description="In an ovarian endometrioid sample; somatic mutation." evidence="18">
    <original>A</original>
    <variation>T</variation>
    <location>
        <position position="281"/>
    </location>
</feature>
<feature type="sequence variant" id="VAR_040808" description="In dbSNP:rs34683477." evidence="18">
    <original>A</original>
    <variation>V</variation>
    <location>
        <position position="281"/>
    </location>
</feature>
<feature type="sequence variant" id="VAR_076448" description="In SFMMP; produces protein aggregation; dbSNP:rs863225437." evidence="22">
    <original>F</original>
    <variation>C</variation>
    <location>
        <position position="368"/>
    </location>
</feature>
<feature type="sequence variant" id="VAR_087102" description="In SFMMP; mild destabilization of the protein." evidence="29">
    <original>A</original>
    <variation>S</variation>
    <location>
        <position position="505"/>
    </location>
</feature>
<feature type="sequence variant" id="VAR_022827" description="In dbSNP:rs3769148." evidence="6 7 8 18 33">
    <original>S</original>
    <variation>L</variation>
    <location>
        <position position="531"/>
    </location>
</feature>
<feature type="sequence variant" id="VAR_040809" description="In dbSNP:rs7593622." evidence="18">
    <original>R</original>
    <variation>W</variation>
    <location>
        <position position="580"/>
    </location>
</feature>
<feature type="sequence variant" id="VAR_040810" description="In dbSNP:rs56202258." evidence="18">
    <original>P</original>
    <variation>T</variation>
    <location>
        <position position="740"/>
    </location>
</feature>
<feature type="sequence variant" id="VAR_040811" description="In dbSNP:rs35608243." evidence="18">
    <original>Y</original>
    <variation>H</variation>
    <location>
        <position position="773"/>
    </location>
</feature>
<feature type="sequence variant" id="VAR_040812" description="In dbSNP:rs55830025." evidence="18 34">
    <original>K</original>
    <variation>T</variation>
    <location>
        <position position="784"/>
    </location>
</feature>
<feature type="mutagenesis site" description="Loss of kinase activity. Does not affect ability to activate EIF2AK4/GCN2 in response to mild ribosome collision." evidence="8 31 32">
    <original>K</original>
    <variation>M</variation>
    <location>
        <position position="45"/>
    </location>
</feature>
<feature type="mutagenesis site" description="Loss of autophosphorylation activity." evidence="14">
    <original>T</original>
    <variation>A</variation>
    <location>
        <position position="161"/>
    </location>
</feature>
<feature type="mutagenesis site" description="Slight loss of autophosphorylation activity." evidence="14">
    <original>T</original>
    <variation>A</variation>
    <location>
        <position position="162"/>
    </location>
</feature>
<feature type="mutagenesis site" description="Loss of autophosphorylation activity." evidence="14">
    <original>S</original>
    <variation>A</variation>
    <location>
        <position position="165"/>
    </location>
</feature>
<feature type="mutagenesis site" description="Abolished association with BTRC without affecting protein stability." evidence="30">
    <original>S</original>
    <variation>A</variation>
    <location>
        <position position="657"/>
    </location>
</feature>
<feature type="mutagenesis site" description="Mimics phosphorylation; impaired ribosome-binding." evidence="30">
    <original>TDSRASEEDS</original>
    <variation>DDDRADEEDD</variation>
    <variation>EDERAEEEDE</variation>
    <location>
        <begin position="752"/>
        <end position="761"/>
    </location>
</feature>
<feature type="sequence conflict" description="In Ref. 1; AAF63490." evidence="44" ref="1">
    <original>C</original>
    <variation>W</variation>
    <location>
        <position position="346"/>
    </location>
</feature>
<feature type="helix" evidence="63">
    <location>
        <begin position="13"/>
        <end position="15"/>
    </location>
</feature>
<feature type="strand" evidence="63">
    <location>
        <begin position="16"/>
        <end position="20"/>
    </location>
</feature>
<feature type="strand" evidence="64">
    <location>
        <begin position="24"/>
        <end position="26"/>
    </location>
</feature>
<feature type="strand" evidence="63">
    <location>
        <begin position="30"/>
        <end position="35"/>
    </location>
</feature>
<feature type="turn" evidence="63">
    <location>
        <begin position="36"/>
        <end position="39"/>
    </location>
</feature>
<feature type="strand" evidence="63">
    <location>
        <begin position="40"/>
        <end position="48"/>
    </location>
</feature>
<feature type="helix" evidence="63">
    <location>
        <begin position="52"/>
        <end position="57"/>
    </location>
</feature>
<feature type="strand" evidence="63">
    <location>
        <begin position="68"/>
        <end position="74"/>
    </location>
</feature>
<feature type="strand" evidence="63">
    <location>
        <begin position="77"/>
        <end position="83"/>
    </location>
</feature>
<feature type="helix" evidence="63">
    <location>
        <begin position="90"/>
        <end position="94"/>
    </location>
</feature>
<feature type="helix" evidence="63">
    <location>
        <begin position="97"/>
        <end position="101"/>
    </location>
</feature>
<feature type="helix" evidence="63">
    <location>
        <begin position="104"/>
        <end position="123"/>
    </location>
</feature>
<feature type="strand" evidence="63">
    <location>
        <begin position="125"/>
        <end position="127"/>
    </location>
</feature>
<feature type="helix" evidence="63">
    <location>
        <begin position="136"/>
        <end position="138"/>
    </location>
</feature>
<feature type="strand" evidence="63">
    <location>
        <begin position="139"/>
        <end position="141"/>
    </location>
</feature>
<feature type="strand" evidence="63">
    <location>
        <begin position="147"/>
        <end position="149"/>
    </location>
</feature>
<feature type="helix" evidence="63">
    <location>
        <begin position="154"/>
        <end position="157"/>
    </location>
</feature>
<feature type="helix" evidence="63">
    <location>
        <begin position="159"/>
        <end position="162"/>
    </location>
</feature>
<feature type="helix" evidence="64">
    <location>
        <begin position="163"/>
        <end position="166"/>
    </location>
</feature>
<feature type="turn" evidence="63">
    <location>
        <begin position="167"/>
        <end position="169"/>
    </location>
</feature>
<feature type="helix" evidence="63">
    <location>
        <begin position="170"/>
        <end position="172"/>
    </location>
</feature>
<feature type="helix" evidence="63">
    <location>
        <begin position="175"/>
        <end position="178"/>
    </location>
</feature>
<feature type="helix" evidence="63">
    <location>
        <begin position="186"/>
        <end position="201"/>
    </location>
</feature>
<feature type="turn" evidence="63">
    <location>
        <begin position="205"/>
        <end position="208"/>
    </location>
</feature>
<feature type="helix" evidence="63">
    <location>
        <begin position="211"/>
        <end position="220"/>
    </location>
</feature>
<feature type="helix" evidence="63">
    <location>
        <begin position="233"/>
        <end position="242"/>
    </location>
</feature>
<feature type="helix" evidence="63">
    <location>
        <begin position="247"/>
        <end position="249"/>
    </location>
</feature>
<feature type="helix" evidence="63">
    <location>
        <begin position="253"/>
        <end position="264"/>
    </location>
</feature>
<feature type="helix" evidence="63">
    <location>
        <begin position="269"/>
        <end position="277"/>
    </location>
</feature>
<feature type="helix" evidence="63">
    <location>
        <begin position="280"/>
        <end position="298"/>
    </location>
</feature>
<feature type="modified residue" description="Phosphoserine" evidence="56 57">
    <location sequence="Q9NYL2-2">
        <position position="339"/>
    </location>
</feature>
<feature type="modified residue" description="Phosphoserine" evidence="7">
    <location sequence="Q9NYL2-2">
        <position position="429"/>
    </location>
</feature>
<feature type="modified residue" description="Phosphoserine" evidence="56 57">
    <location sequence="Q9NYL2-2">
        <position position="434"/>
    </location>
</feature>
<feature type="modified residue" description="Phosphoserine" evidence="55 56 57">
    <location sequence="Q9NYL2-2">
        <position position="454"/>
    </location>
</feature>
<protein>
    <recommendedName>
        <fullName evidence="44">Mitogen-activated protein kinase kinase kinase 20</fullName>
        <ecNumber evidence="8 12 23">2.7.11.25</ecNumber>
    </recommendedName>
    <alternativeName>
        <fullName>Human cervical cancer suppressor gene 4 protein</fullName>
        <shortName>HCCS-4</shortName>
    </alternativeName>
    <alternativeName>
        <fullName>Leucine zipper- and sterile alpha motif-containing kinase</fullName>
    </alternativeName>
    <alternativeName>
        <fullName>MLK-like mitogen-activated protein triple kinase</fullName>
    </alternativeName>
    <alternativeName>
        <fullName>Mitogen-activated protein kinase kinase kinase MLT</fullName>
    </alternativeName>
    <alternativeName>
        <fullName evidence="37">Mixed lineage kinase 7</fullName>
    </alternativeName>
    <alternativeName>
        <fullName evidence="36">Mixed lineage kinase-related kinase</fullName>
        <shortName evidence="38">MLK-related kinase</shortName>
        <shortName evidence="38">MRK</shortName>
    </alternativeName>
    <alternativeName>
        <fullName>Sterile alpha motif- and leucine zipper-containing kinase AZK</fullName>
    </alternativeName>
</protein>
<dbReference type="EC" id="2.7.11.25" evidence="8 12 23"/>
<dbReference type="EMBL" id="AF238255">
    <property type="protein sequence ID" value="AAF63490.1"/>
    <property type="molecule type" value="mRNA"/>
</dbReference>
<dbReference type="EMBL" id="AB049733">
    <property type="protein sequence ID" value="BAB16444.1"/>
    <property type="molecule type" value="mRNA"/>
</dbReference>
<dbReference type="EMBL" id="AB049734">
    <property type="protein sequence ID" value="BAB16445.1"/>
    <property type="molecule type" value="mRNA"/>
</dbReference>
<dbReference type="EMBL" id="AF325454">
    <property type="protein sequence ID" value="AAK11615.1"/>
    <property type="molecule type" value="mRNA"/>
</dbReference>
<dbReference type="EMBL" id="AF480461">
    <property type="protein sequence ID" value="AAL85891.1"/>
    <property type="molecule type" value="mRNA"/>
</dbReference>
<dbReference type="EMBL" id="AF480462">
    <property type="protein sequence ID" value="AAL85892.1"/>
    <property type="molecule type" value="mRNA"/>
</dbReference>
<dbReference type="EMBL" id="AB030034">
    <property type="protein sequence ID" value="BAB12040.1"/>
    <property type="molecule type" value="mRNA"/>
</dbReference>
<dbReference type="EMBL" id="AF251441">
    <property type="protein sequence ID" value="AAF65822.1"/>
    <property type="molecule type" value="mRNA"/>
</dbReference>
<dbReference type="EMBL" id="AF465843">
    <property type="protein sequence ID" value="AAO33376.1"/>
    <property type="molecule type" value="mRNA"/>
</dbReference>
<dbReference type="EMBL" id="AK056310">
    <property type="protein sequence ID" value="BAG51674.1"/>
    <property type="molecule type" value="mRNA"/>
</dbReference>
<dbReference type="EMBL" id="AB208974">
    <property type="protein sequence ID" value="BAD92211.1"/>
    <property type="status" value="ALT_INIT"/>
    <property type="molecule type" value="mRNA"/>
</dbReference>
<dbReference type="EMBL" id="AC092573">
    <property type="protein sequence ID" value="AAX82002.1"/>
    <property type="molecule type" value="Genomic_DNA"/>
</dbReference>
<dbReference type="EMBL" id="AC013461">
    <property type="protein sequence ID" value="AAX93067.1"/>
    <property type="molecule type" value="Genomic_DNA"/>
</dbReference>
<dbReference type="EMBL" id="AC019046">
    <property type="status" value="NOT_ANNOTATED_CDS"/>
    <property type="molecule type" value="Genomic_DNA"/>
</dbReference>
<dbReference type="EMBL" id="CH471058">
    <property type="protein sequence ID" value="EAX11164.1"/>
    <property type="molecule type" value="Genomic_DNA"/>
</dbReference>
<dbReference type="EMBL" id="BC001401">
    <property type="protein sequence ID" value="AAH01401.1"/>
    <property type="molecule type" value="mRNA"/>
</dbReference>
<dbReference type="CCDS" id="CCDS2251.1">
    <molecule id="Q9NYL2-2"/>
</dbReference>
<dbReference type="CCDS" id="CCDS42777.1">
    <molecule id="Q9NYL2-1"/>
</dbReference>
<dbReference type="RefSeq" id="NP_057737.2">
    <molecule id="Q9NYL2-1"/>
    <property type="nucleotide sequence ID" value="NM_016653.3"/>
</dbReference>
<dbReference type="RefSeq" id="NP_598407.1">
    <molecule id="Q9NYL2-2"/>
    <property type="nucleotide sequence ID" value="NM_133646.3"/>
</dbReference>
<dbReference type="RefSeq" id="XP_005246697.1">
    <molecule id="Q9NYL2-1"/>
    <property type="nucleotide sequence ID" value="XM_005246640.3"/>
</dbReference>
<dbReference type="RefSeq" id="XP_016859812.1">
    <molecule id="Q9NYL2-2"/>
    <property type="nucleotide sequence ID" value="XM_017004323.2"/>
</dbReference>
<dbReference type="RefSeq" id="XP_016859813.1">
    <molecule id="Q9NYL2-2"/>
    <property type="nucleotide sequence ID" value="XM_017004324.2"/>
</dbReference>
<dbReference type="RefSeq" id="XP_047300702.1">
    <molecule id="Q9NYL2-1"/>
    <property type="nucleotide sequence ID" value="XM_047444746.1"/>
</dbReference>
<dbReference type="RefSeq" id="XP_047300703.1">
    <molecule id="Q9NYL2-1"/>
    <property type="nucleotide sequence ID" value="XM_047444747.1"/>
</dbReference>
<dbReference type="RefSeq" id="XP_047300704.1">
    <molecule id="Q9NYL2-2"/>
    <property type="nucleotide sequence ID" value="XM_047444748.1"/>
</dbReference>
<dbReference type="RefSeq" id="XP_054198527.1">
    <molecule id="Q9NYL2-1"/>
    <property type="nucleotide sequence ID" value="XM_054342552.1"/>
</dbReference>
<dbReference type="RefSeq" id="XP_054198528.1">
    <molecule id="Q9NYL2-1"/>
    <property type="nucleotide sequence ID" value="XM_054342553.1"/>
</dbReference>
<dbReference type="RefSeq" id="XP_054198529.1">
    <molecule id="Q9NYL2-1"/>
    <property type="nucleotide sequence ID" value="XM_054342554.1"/>
</dbReference>
<dbReference type="RefSeq" id="XP_054198530.1">
    <molecule id="Q9NYL2-2"/>
    <property type="nucleotide sequence ID" value="XM_054342555.1"/>
</dbReference>
<dbReference type="RefSeq" id="XP_054198531.1">
    <molecule id="Q9NYL2-2"/>
    <property type="nucleotide sequence ID" value="XM_054342556.1"/>
</dbReference>
<dbReference type="RefSeq" id="XP_054198532.1">
    <molecule id="Q9NYL2-2"/>
    <property type="nucleotide sequence ID" value="XM_054342557.1"/>
</dbReference>
<dbReference type="PDB" id="5HES">
    <property type="method" value="X-ray"/>
    <property type="resolution" value="2.14 A"/>
    <property type="chains" value="A/B=5-309"/>
</dbReference>
<dbReference type="PDB" id="5X5O">
    <property type="method" value="X-ray"/>
    <property type="resolution" value="1.87 A"/>
    <property type="chains" value="A=5-309"/>
</dbReference>
<dbReference type="PDB" id="6JUT">
    <property type="method" value="X-ray"/>
    <property type="resolution" value="2.10 A"/>
    <property type="chains" value="A=5-309"/>
</dbReference>
<dbReference type="PDB" id="6JUU">
    <property type="method" value="X-ray"/>
    <property type="resolution" value="1.90 A"/>
    <property type="chains" value="A=5-309"/>
</dbReference>
<dbReference type="PDB" id="7YAW">
    <property type="method" value="X-ray"/>
    <property type="resolution" value="2.10 A"/>
    <property type="chains" value="A/B/C/D=5-309"/>
</dbReference>
<dbReference type="PDB" id="7YAZ">
    <property type="method" value="X-ray"/>
    <property type="resolution" value="2.54 A"/>
    <property type="chains" value="A=5-309"/>
</dbReference>
<dbReference type="PDBsum" id="5HES"/>
<dbReference type="PDBsum" id="5X5O"/>
<dbReference type="PDBsum" id="6JUT"/>
<dbReference type="PDBsum" id="6JUU"/>
<dbReference type="PDBsum" id="7YAW"/>
<dbReference type="PDBsum" id="7YAZ"/>
<dbReference type="SMR" id="Q9NYL2"/>
<dbReference type="BioGRID" id="119725">
    <property type="interactions" value="106"/>
</dbReference>
<dbReference type="CORUM" id="Q9NYL2"/>
<dbReference type="FunCoup" id="Q9NYL2">
    <property type="interactions" value="1616"/>
</dbReference>
<dbReference type="IntAct" id="Q9NYL2">
    <property type="interactions" value="80"/>
</dbReference>
<dbReference type="MINT" id="Q9NYL2"/>
<dbReference type="STRING" id="9606.ENSP00000364361"/>
<dbReference type="BindingDB" id="Q9NYL2"/>
<dbReference type="ChEMBL" id="CHEMBL3886"/>
<dbReference type="DrugBank" id="DB01254">
    <property type="generic name" value="Dasatinib"/>
</dbReference>
<dbReference type="DrugBank" id="DB12010">
    <property type="generic name" value="Fostamatinib"/>
</dbReference>
<dbReference type="DrugCentral" id="Q9NYL2"/>
<dbReference type="GuidetoPHARMACOLOGY" id="2289"/>
<dbReference type="GlyGen" id="Q9NYL2">
    <property type="glycosylation" value="1 site, 1 O-linked glycan (1 site)"/>
</dbReference>
<dbReference type="iPTMnet" id="Q9NYL2"/>
<dbReference type="MetOSite" id="Q9NYL2"/>
<dbReference type="PhosphoSitePlus" id="Q9NYL2"/>
<dbReference type="BioMuta" id="MAP3K20"/>
<dbReference type="DMDM" id="313104215"/>
<dbReference type="jPOST" id="Q9NYL2"/>
<dbReference type="MassIVE" id="Q9NYL2"/>
<dbReference type="PaxDb" id="9606-ENSP00000364361"/>
<dbReference type="PeptideAtlas" id="Q9NYL2"/>
<dbReference type="ProteomicsDB" id="83246">
    <molecule id="Q9NYL2-1"/>
</dbReference>
<dbReference type="ProteomicsDB" id="83248">
    <molecule id="Q9NYL2-3"/>
</dbReference>
<dbReference type="Pumba" id="Q9NYL2"/>
<dbReference type="Antibodypedia" id="2065">
    <property type="antibodies" value="318 antibodies from 34 providers"/>
</dbReference>
<dbReference type="DNASU" id="51776"/>
<dbReference type="Ensembl" id="ENST00000338983.7">
    <molecule id="Q9NYL2-2"/>
    <property type="protein sequence ID" value="ENSP00000340257.3"/>
    <property type="gene ID" value="ENSG00000091436.17"/>
</dbReference>
<dbReference type="Ensembl" id="ENST00000375213.8">
    <molecule id="Q9NYL2-1"/>
    <property type="protein sequence ID" value="ENSP00000364361.3"/>
    <property type="gene ID" value="ENSG00000091436.17"/>
</dbReference>
<dbReference type="Ensembl" id="ENST00000409176.6">
    <molecule id="Q9NYL2-1"/>
    <property type="protein sequence ID" value="ENSP00000387259.2"/>
    <property type="gene ID" value="ENSG00000091436.17"/>
</dbReference>
<dbReference type="Ensembl" id="ENST00000539448.5">
    <molecule id="Q9NYL2-2"/>
    <property type="protein sequence ID" value="ENSP00000439414.1"/>
    <property type="gene ID" value="ENSG00000091436.17"/>
</dbReference>
<dbReference type="GeneID" id="51776"/>
<dbReference type="KEGG" id="hsa:51776"/>
<dbReference type="MANE-Select" id="ENST00000375213.8">
    <property type="protein sequence ID" value="ENSP00000364361.3"/>
    <property type="RefSeq nucleotide sequence ID" value="NM_016653.3"/>
    <property type="RefSeq protein sequence ID" value="NP_057737.2"/>
</dbReference>
<dbReference type="UCSC" id="uc002uhz.4">
    <molecule id="Q9NYL2-1"/>
    <property type="organism name" value="human"/>
</dbReference>
<dbReference type="AGR" id="HGNC:17797"/>
<dbReference type="CTD" id="51776"/>
<dbReference type="DisGeNET" id="51776"/>
<dbReference type="GeneCards" id="MAP3K20"/>
<dbReference type="HGNC" id="HGNC:17797">
    <property type="gene designation" value="MAP3K20"/>
</dbReference>
<dbReference type="HPA" id="ENSG00000091436">
    <property type="expression patterns" value="Tissue enhanced (skeletal muscle, tongue)"/>
</dbReference>
<dbReference type="MalaCards" id="MAP3K20"/>
<dbReference type="MIM" id="609479">
    <property type="type" value="gene"/>
</dbReference>
<dbReference type="MIM" id="616890">
    <property type="type" value="phenotype"/>
</dbReference>
<dbReference type="MIM" id="617760">
    <property type="type" value="phenotype"/>
</dbReference>
<dbReference type="neXtProt" id="NX_Q9NYL2"/>
<dbReference type="OpenTargets" id="ENSG00000091436"/>
<dbReference type="Orphanet" id="2020">
    <property type="disease" value="Congenital fiber-type disproportion myopathy"/>
</dbReference>
<dbReference type="Orphanet" id="488232">
    <property type="disease" value="Split-foot malformation-mesoaxial polydactyly syndrome"/>
</dbReference>
<dbReference type="VEuPathDB" id="HostDB:ENSG00000091436"/>
<dbReference type="eggNOG" id="KOG0192">
    <property type="taxonomic scope" value="Eukaryota"/>
</dbReference>
<dbReference type="GeneTree" id="ENSGT00940000161352"/>
<dbReference type="HOGENOM" id="CLU_019131_1_0_1"/>
<dbReference type="InParanoid" id="Q9NYL2"/>
<dbReference type="OMA" id="TEMSCQI"/>
<dbReference type="OrthoDB" id="339325at2759"/>
<dbReference type="PAN-GO" id="Q9NYL2">
    <property type="GO annotations" value="4 GO annotations based on evolutionary models"/>
</dbReference>
<dbReference type="PhylomeDB" id="Q9NYL2"/>
<dbReference type="PathwayCommons" id="Q9NYL2"/>
<dbReference type="SignaLink" id="Q9NYL2"/>
<dbReference type="SIGNOR" id="Q9NYL2"/>
<dbReference type="BioGRID-ORCS" id="51776">
    <property type="hits" value="13 hits in 1141 CRISPR screens"/>
</dbReference>
<dbReference type="ChiTaRS" id="MAP3K20">
    <property type="organism name" value="human"/>
</dbReference>
<dbReference type="GeneWiki" id="ZAK"/>
<dbReference type="GenomeRNAi" id="51776"/>
<dbReference type="Pharos" id="Q9NYL2">
    <property type="development level" value="Tchem"/>
</dbReference>
<dbReference type="PRO" id="PR:Q9NYL2"/>
<dbReference type="Proteomes" id="UP000005640">
    <property type="component" value="Chromosome 2"/>
</dbReference>
<dbReference type="RNAct" id="Q9NYL2">
    <property type="molecule type" value="protein"/>
</dbReference>
<dbReference type="Bgee" id="ENSG00000091436">
    <property type="expression patterns" value="Expressed in heart right ventricle and 192 other cell types or tissues"/>
</dbReference>
<dbReference type="ExpressionAtlas" id="Q9NYL2">
    <property type="expression patterns" value="baseline and differential"/>
</dbReference>
<dbReference type="GO" id="GO:0005737">
    <property type="term" value="C:cytoplasm"/>
    <property type="evidence" value="ECO:0000314"/>
    <property type="project" value="UniProt"/>
</dbReference>
<dbReference type="GO" id="GO:0005829">
    <property type="term" value="C:cytosol"/>
    <property type="evidence" value="ECO:0000314"/>
    <property type="project" value="HPA"/>
</dbReference>
<dbReference type="GO" id="GO:0005634">
    <property type="term" value="C:nucleus"/>
    <property type="evidence" value="ECO:0007669"/>
    <property type="project" value="UniProtKB-SubCell"/>
</dbReference>
<dbReference type="GO" id="GO:0005524">
    <property type="term" value="F:ATP binding"/>
    <property type="evidence" value="ECO:0000314"/>
    <property type="project" value="UniProtKB"/>
</dbReference>
<dbReference type="GO" id="GO:0004706">
    <property type="term" value="F:JUN kinase kinase kinase activity"/>
    <property type="evidence" value="ECO:0000314"/>
    <property type="project" value="UniProt"/>
</dbReference>
<dbReference type="GO" id="GO:0000287">
    <property type="term" value="F:magnesium ion binding"/>
    <property type="evidence" value="ECO:0000314"/>
    <property type="project" value="UniProtKB"/>
</dbReference>
<dbReference type="GO" id="GO:0004709">
    <property type="term" value="F:MAP kinase kinase kinase activity"/>
    <property type="evidence" value="ECO:0000314"/>
    <property type="project" value="UniProt"/>
</dbReference>
<dbReference type="GO" id="GO:0030295">
    <property type="term" value="F:protein kinase activator activity"/>
    <property type="evidence" value="ECO:0000314"/>
    <property type="project" value="UniProtKB"/>
</dbReference>
<dbReference type="GO" id="GO:0019887">
    <property type="term" value="F:protein kinase regulator activity"/>
    <property type="evidence" value="ECO:0000314"/>
    <property type="project" value="UniProt"/>
</dbReference>
<dbReference type="GO" id="GO:0106310">
    <property type="term" value="F:protein serine kinase activity"/>
    <property type="evidence" value="ECO:0007669"/>
    <property type="project" value="RHEA"/>
</dbReference>
<dbReference type="GO" id="GO:0004674">
    <property type="term" value="F:protein serine/threonine kinase activity"/>
    <property type="evidence" value="ECO:0000314"/>
    <property type="project" value="UniProt"/>
</dbReference>
<dbReference type="GO" id="GO:0043022">
    <property type="term" value="F:ribosome binding"/>
    <property type="evidence" value="ECO:0000314"/>
    <property type="project" value="UniProtKB"/>
</dbReference>
<dbReference type="GO" id="GO:0003723">
    <property type="term" value="F:RNA binding"/>
    <property type="evidence" value="ECO:0007005"/>
    <property type="project" value="UniProtKB"/>
</dbReference>
<dbReference type="GO" id="GO:0070181">
    <property type="term" value="F:small ribosomal subunit rRNA binding"/>
    <property type="evidence" value="ECO:0000314"/>
    <property type="project" value="UniProtKB"/>
</dbReference>
<dbReference type="GO" id="GO:0170011">
    <property type="term" value="F:stalled ribosome sensor activity"/>
    <property type="evidence" value="ECO:0000314"/>
    <property type="project" value="UniProt"/>
</dbReference>
<dbReference type="GO" id="GO:0008219">
    <property type="term" value="P:cell death"/>
    <property type="evidence" value="ECO:0000303"/>
    <property type="project" value="UniProtKB"/>
</dbReference>
<dbReference type="GO" id="GO:0030154">
    <property type="term" value="P:cell differentiation"/>
    <property type="evidence" value="ECO:0000303"/>
    <property type="project" value="UniProtKB"/>
</dbReference>
<dbReference type="GO" id="GO:0071480">
    <property type="term" value="P:cellular response to gamma radiation"/>
    <property type="evidence" value="ECO:0000314"/>
    <property type="project" value="UniProtKB"/>
</dbReference>
<dbReference type="GO" id="GO:0071493">
    <property type="term" value="P:cellular response to UV-B"/>
    <property type="evidence" value="ECO:0000314"/>
    <property type="project" value="UniProt"/>
</dbReference>
<dbReference type="GO" id="GO:0007059">
    <property type="term" value="P:chromosome segregation"/>
    <property type="evidence" value="ECO:0000318"/>
    <property type="project" value="GO_Central"/>
</dbReference>
<dbReference type="GO" id="GO:0007010">
    <property type="term" value="P:cytoskeleton organization"/>
    <property type="evidence" value="ECO:0007669"/>
    <property type="project" value="Ensembl"/>
</dbReference>
<dbReference type="GO" id="GO:0000077">
    <property type="term" value="P:DNA damage checkpoint signaling"/>
    <property type="evidence" value="ECO:0000315"/>
    <property type="project" value="UniProtKB"/>
</dbReference>
<dbReference type="GO" id="GO:0042733">
    <property type="term" value="P:embryonic digit morphogenesis"/>
    <property type="evidence" value="ECO:0000315"/>
    <property type="project" value="UniProtKB"/>
</dbReference>
<dbReference type="GO" id="GO:0140469">
    <property type="term" value="P:GCN2-mediated signaling"/>
    <property type="evidence" value="ECO:0000314"/>
    <property type="project" value="UniProtKB"/>
</dbReference>
<dbReference type="GO" id="GO:0006954">
    <property type="term" value="P:inflammatory response"/>
    <property type="evidence" value="ECO:0000315"/>
    <property type="project" value="GO_Central"/>
</dbReference>
<dbReference type="GO" id="GO:0007254">
    <property type="term" value="P:JNK cascade"/>
    <property type="evidence" value="ECO:0000314"/>
    <property type="project" value="UniProtKB"/>
</dbReference>
<dbReference type="GO" id="GO:0060173">
    <property type="term" value="P:limb development"/>
    <property type="evidence" value="ECO:0000315"/>
    <property type="project" value="UniProtKB"/>
</dbReference>
<dbReference type="GO" id="GO:0000165">
    <property type="term" value="P:MAPK cascade"/>
    <property type="evidence" value="ECO:0000314"/>
    <property type="project" value="UniProtKB"/>
</dbReference>
<dbReference type="GO" id="GO:0070303">
    <property type="term" value="P:negative regulation of stress-activated protein kinase signaling cascade"/>
    <property type="evidence" value="ECO:0000314"/>
    <property type="project" value="UniProt"/>
</dbReference>
<dbReference type="GO" id="GO:1902010">
    <property type="term" value="P:negative regulation of translation in response to endoplasmic reticulum stress"/>
    <property type="evidence" value="ECO:0000314"/>
    <property type="project" value="UniProt"/>
</dbReference>
<dbReference type="GO" id="GO:0038066">
    <property type="term" value="P:p38MAPK cascade"/>
    <property type="evidence" value="ECO:0000314"/>
    <property type="project" value="UniProtKB"/>
</dbReference>
<dbReference type="GO" id="GO:0043065">
    <property type="term" value="P:positive regulation of apoptotic process"/>
    <property type="evidence" value="ECO:0000314"/>
    <property type="project" value="UniProtKB"/>
</dbReference>
<dbReference type="GO" id="GO:1904291">
    <property type="term" value="P:positive regulation of mitotic DNA damage checkpoint"/>
    <property type="evidence" value="ECO:0000314"/>
    <property type="project" value="UniProtKB"/>
</dbReference>
<dbReference type="GO" id="GO:0043068">
    <property type="term" value="P:positive regulation of programmed cell death"/>
    <property type="evidence" value="ECO:0000314"/>
    <property type="project" value="UniProtKB"/>
</dbReference>
<dbReference type="GO" id="GO:0046777">
    <property type="term" value="P:protein autophosphorylation"/>
    <property type="evidence" value="ECO:0000314"/>
    <property type="project" value="UniProtKB"/>
</dbReference>
<dbReference type="GO" id="GO:0006468">
    <property type="term" value="P:protein phosphorylation"/>
    <property type="evidence" value="ECO:0000314"/>
    <property type="project" value="UniProtKB"/>
</dbReference>
<dbReference type="GO" id="GO:0070269">
    <property type="term" value="P:pyroptotic inflammatory response"/>
    <property type="evidence" value="ECO:0000314"/>
    <property type="project" value="UniProtKB"/>
</dbReference>
<dbReference type="GO" id="GO:0030071">
    <property type="term" value="P:regulation of mitotic metaphase/anaphase transition"/>
    <property type="evidence" value="ECO:0000318"/>
    <property type="project" value="GO_Central"/>
</dbReference>
<dbReference type="GO" id="GO:0051403">
    <property type="term" value="P:stress-activated MAPK cascade"/>
    <property type="evidence" value="ECO:0000314"/>
    <property type="project" value="UniProtKB"/>
</dbReference>
<dbReference type="GO" id="GO:0031098">
    <property type="term" value="P:stress-activated protein kinase signaling cascade"/>
    <property type="evidence" value="ECO:0000314"/>
    <property type="project" value="UniProt"/>
</dbReference>
<dbReference type="CDD" id="cd09529">
    <property type="entry name" value="SAM_MLTK"/>
    <property type="match status" value="1"/>
</dbReference>
<dbReference type="CDD" id="cd14060">
    <property type="entry name" value="STKc_MLTK"/>
    <property type="match status" value="1"/>
</dbReference>
<dbReference type="FunFam" id="1.10.150.50:FF:000065">
    <property type="entry name" value="mitogen-activated protein kinase kinase kinase 20 isoform X1"/>
    <property type="match status" value="1"/>
</dbReference>
<dbReference type="FunFam" id="3.30.200.20:FF:000220">
    <property type="entry name" value="mitogen-activated protein kinase kinase kinase 20 isoform X1"/>
    <property type="match status" value="1"/>
</dbReference>
<dbReference type="FunFam" id="1.10.510.10:FF:000243">
    <property type="entry name" value="mitogen-activated protein kinase kinase kinase 20 isoform X2"/>
    <property type="match status" value="1"/>
</dbReference>
<dbReference type="Gene3D" id="3.30.200.20">
    <property type="entry name" value="Phosphorylase Kinase, domain 1"/>
    <property type="match status" value="1"/>
</dbReference>
<dbReference type="Gene3D" id="1.10.150.50">
    <property type="entry name" value="Transcription Factor, Ets-1"/>
    <property type="match status" value="1"/>
</dbReference>
<dbReference type="Gene3D" id="1.10.510.10">
    <property type="entry name" value="Transferase(Phosphotransferase) domain 1"/>
    <property type="match status" value="1"/>
</dbReference>
<dbReference type="InterPro" id="IPR011009">
    <property type="entry name" value="Kinase-like_dom_sf"/>
</dbReference>
<dbReference type="InterPro" id="IPR000719">
    <property type="entry name" value="Prot_kinase_dom"/>
</dbReference>
<dbReference type="InterPro" id="IPR001660">
    <property type="entry name" value="SAM"/>
</dbReference>
<dbReference type="InterPro" id="IPR013761">
    <property type="entry name" value="SAM/pointed_sf"/>
</dbReference>
<dbReference type="InterPro" id="IPR001245">
    <property type="entry name" value="Ser-Thr/Tyr_kinase_cat_dom"/>
</dbReference>
<dbReference type="InterPro" id="IPR008271">
    <property type="entry name" value="Ser/Thr_kinase_AS"/>
</dbReference>
<dbReference type="InterPro" id="IPR051681">
    <property type="entry name" value="Ser/Thr_Kinases-Pseudokinases"/>
</dbReference>
<dbReference type="PANTHER" id="PTHR44329:SF288">
    <property type="entry name" value="MITOGEN-ACTIVATED PROTEIN KINASE KINASE KINASE 20"/>
    <property type="match status" value="1"/>
</dbReference>
<dbReference type="PANTHER" id="PTHR44329">
    <property type="entry name" value="SERINE/THREONINE-PROTEIN KINASE TNNI3K-RELATED"/>
    <property type="match status" value="1"/>
</dbReference>
<dbReference type="Pfam" id="PF07714">
    <property type="entry name" value="PK_Tyr_Ser-Thr"/>
    <property type="match status" value="1"/>
</dbReference>
<dbReference type="Pfam" id="PF00536">
    <property type="entry name" value="SAM_1"/>
    <property type="match status" value="1"/>
</dbReference>
<dbReference type="PRINTS" id="PR00109">
    <property type="entry name" value="TYRKINASE"/>
</dbReference>
<dbReference type="SMART" id="SM00220">
    <property type="entry name" value="S_TKc"/>
    <property type="match status" value="1"/>
</dbReference>
<dbReference type="SMART" id="SM00454">
    <property type="entry name" value="SAM"/>
    <property type="match status" value="1"/>
</dbReference>
<dbReference type="SUPFAM" id="SSF56112">
    <property type="entry name" value="Protein kinase-like (PK-like)"/>
    <property type="match status" value="1"/>
</dbReference>
<dbReference type="SUPFAM" id="SSF47769">
    <property type="entry name" value="SAM/Pointed domain"/>
    <property type="match status" value="1"/>
</dbReference>
<dbReference type="PROSITE" id="PS50011">
    <property type="entry name" value="PROTEIN_KINASE_DOM"/>
    <property type="match status" value="1"/>
</dbReference>
<dbReference type="PROSITE" id="PS00108">
    <property type="entry name" value="PROTEIN_KINASE_ST"/>
    <property type="match status" value="1"/>
</dbReference>
<dbReference type="PROSITE" id="PS50105">
    <property type="entry name" value="SAM_DOMAIN"/>
    <property type="match status" value="1"/>
</dbReference>
<keyword id="KW-0002">3D-structure</keyword>
<keyword id="KW-0007">Acetylation</keyword>
<keyword id="KW-0025">Alternative splicing</keyword>
<keyword id="KW-0067">ATP-binding</keyword>
<keyword id="KW-0131">Cell cycle</keyword>
<keyword id="KW-0963">Cytoplasm</keyword>
<keyword id="KW-0225">Disease variant</keyword>
<keyword id="KW-0418">Kinase</keyword>
<keyword id="KW-0460">Magnesium</keyword>
<keyword id="KW-0479">Metal-binding</keyword>
<keyword id="KW-0547">Nucleotide-binding</keyword>
<keyword id="KW-0539">Nucleus</keyword>
<keyword id="KW-0597">Phosphoprotein</keyword>
<keyword id="KW-1267">Proteomics identification</keyword>
<keyword id="KW-1185">Reference proteome</keyword>
<keyword id="KW-0694">RNA-binding</keyword>
<keyword id="KW-0699">rRNA-binding</keyword>
<keyword id="KW-0723">Serine/threonine-protein kinase</keyword>
<keyword id="KW-0808">Transferase</keyword>
<organism>
    <name type="scientific">Homo sapiens</name>
    <name type="common">Human</name>
    <dbReference type="NCBI Taxonomy" id="9606"/>
    <lineage>
        <taxon>Eukaryota</taxon>
        <taxon>Metazoa</taxon>
        <taxon>Chordata</taxon>
        <taxon>Craniata</taxon>
        <taxon>Vertebrata</taxon>
        <taxon>Euteleostomi</taxon>
        <taxon>Mammalia</taxon>
        <taxon>Eutheria</taxon>
        <taxon>Euarchontoglires</taxon>
        <taxon>Primates</taxon>
        <taxon>Haplorrhini</taxon>
        <taxon>Catarrhini</taxon>
        <taxon>Hominidae</taxon>
        <taxon>Homo</taxon>
    </lineage>
</organism>